<organism>
    <name type="scientific">Homo sapiens</name>
    <name type="common">Human</name>
    <dbReference type="NCBI Taxonomy" id="9606"/>
    <lineage>
        <taxon>Eukaryota</taxon>
        <taxon>Metazoa</taxon>
        <taxon>Chordata</taxon>
        <taxon>Craniata</taxon>
        <taxon>Vertebrata</taxon>
        <taxon>Euteleostomi</taxon>
        <taxon>Mammalia</taxon>
        <taxon>Eutheria</taxon>
        <taxon>Euarchontoglires</taxon>
        <taxon>Primates</taxon>
        <taxon>Haplorrhini</taxon>
        <taxon>Catarrhini</taxon>
        <taxon>Hominidae</taxon>
        <taxon>Homo</taxon>
    </lineage>
</organism>
<proteinExistence type="evidence at protein level"/>
<dbReference type="EMBL" id="X98330">
    <property type="protein sequence ID" value="CAA66975.1"/>
    <property type="molecule type" value="mRNA"/>
</dbReference>
<dbReference type="EMBL" id="AJ300340">
    <property type="protein sequence ID" value="CAC18855.1"/>
    <property type="molecule type" value="Genomic_DNA"/>
</dbReference>
<dbReference type="EMBL" id="AJ300341">
    <property type="protein sequence ID" value="CAC18855.1"/>
    <property type="status" value="JOINED"/>
    <property type="molecule type" value="Genomic_DNA"/>
</dbReference>
<dbReference type="EMBL" id="AJ300342">
    <property type="protein sequence ID" value="CAC18855.1"/>
    <property type="status" value="JOINED"/>
    <property type="molecule type" value="Genomic_DNA"/>
</dbReference>
<dbReference type="EMBL" id="AJ300343">
    <property type="protein sequence ID" value="CAC18855.1"/>
    <property type="status" value="JOINED"/>
    <property type="molecule type" value="Genomic_DNA"/>
</dbReference>
<dbReference type="EMBL" id="AJ300347">
    <property type="protein sequence ID" value="CAC18855.1"/>
    <property type="status" value="JOINED"/>
    <property type="molecule type" value="Genomic_DNA"/>
</dbReference>
<dbReference type="EMBL" id="AJ300349">
    <property type="protein sequence ID" value="CAC18855.1"/>
    <property type="status" value="JOINED"/>
    <property type="molecule type" value="Genomic_DNA"/>
</dbReference>
<dbReference type="EMBL" id="AJ300351">
    <property type="protein sequence ID" value="CAC18855.1"/>
    <property type="status" value="JOINED"/>
    <property type="molecule type" value="Genomic_DNA"/>
</dbReference>
<dbReference type="EMBL" id="AJ300353">
    <property type="protein sequence ID" value="CAC18855.1"/>
    <property type="status" value="JOINED"/>
    <property type="molecule type" value="Genomic_DNA"/>
</dbReference>
<dbReference type="EMBL" id="AJ300355">
    <property type="protein sequence ID" value="CAC18855.1"/>
    <property type="status" value="JOINED"/>
    <property type="molecule type" value="Genomic_DNA"/>
</dbReference>
<dbReference type="EMBL" id="AJ300364">
    <property type="protein sequence ID" value="CAC18855.1"/>
    <property type="status" value="JOINED"/>
    <property type="molecule type" value="Genomic_DNA"/>
</dbReference>
<dbReference type="EMBL" id="AJ300363">
    <property type="protein sequence ID" value="CAC18855.1"/>
    <property type="status" value="JOINED"/>
    <property type="molecule type" value="Genomic_DNA"/>
</dbReference>
<dbReference type="EMBL" id="AJ300362">
    <property type="protein sequence ID" value="CAC18855.1"/>
    <property type="status" value="JOINED"/>
    <property type="molecule type" value="Genomic_DNA"/>
</dbReference>
<dbReference type="EMBL" id="AJ300361">
    <property type="protein sequence ID" value="CAC18855.1"/>
    <property type="status" value="JOINED"/>
    <property type="molecule type" value="Genomic_DNA"/>
</dbReference>
<dbReference type="EMBL" id="AJ300360">
    <property type="protein sequence ID" value="CAC18855.1"/>
    <property type="status" value="JOINED"/>
    <property type="molecule type" value="Genomic_DNA"/>
</dbReference>
<dbReference type="EMBL" id="AJ300359">
    <property type="protein sequence ID" value="CAC18855.1"/>
    <property type="status" value="JOINED"/>
    <property type="molecule type" value="Genomic_DNA"/>
</dbReference>
<dbReference type="EMBL" id="AJ300358">
    <property type="protein sequence ID" value="CAC18855.1"/>
    <property type="status" value="JOINED"/>
    <property type="molecule type" value="Genomic_DNA"/>
</dbReference>
<dbReference type="EMBL" id="AJ300357">
    <property type="protein sequence ID" value="CAC18855.1"/>
    <property type="status" value="JOINED"/>
    <property type="molecule type" value="Genomic_DNA"/>
</dbReference>
<dbReference type="EMBL" id="AJ300356">
    <property type="protein sequence ID" value="CAC18855.1"/>
    <property type="status" value="JOINED"/>
    <property type="molecule type" value="Genomic_DNA"/>
</dbReference>
<dbReference type="EMBL" id="AJ300373">
    <property type="protein sequence ID" value="CAC18855.1"/>
    <property type="status" value="JOINED"/>
    <property type="molecule type" value="Genomic_DNA"/>
</dbReference>
<dbReference type="EMBL" id="AJ300372">
    <property type="protein sequence ID" value="CAC18855.1"/>
    <property type="status" value="JOINED"/>
    <property type="molecule type" value="Genomic_DNA"/>
</dbReference>
<dbReference type="EMBL" id="AJ300371">
    <property type="protein sequence ID" value="CAC18855.1"/>
    <property type="status" value="JOINED"/>
    <property type="molecule type" value="Genomic_DNA"/>
</dbReference>
<dbReference type="EMBL" id="AJ300370">
    <property type="protein sequence ID" value="CAC18855.1"/>
    <property type="status" value="JOINED"/>
    <property type="molecule type" value="Genomic_DNA"/>
</dbReference>
<dbReference type="EMBL" id="AJ300369">
    <property type="protein sequence ID" value="CAC18855.1"/>
    <property type="status" value="JOINED"/>
    <property type="molecule type" value="Genomic_DNA"/>
</dbReference>
<dbReference type="EMBL" id="AJ300368">
    <property type="protein sequence ID" value="CAC18855.1"/>
    <property type="status" value="JOINED"/>
    <property type="molecule type" value="Genomic_DNA"/>
</dbReference>
<dbReference type="EMBL" id="AJ300367">
    <property type="protein sequence ID" value="CAC18855.1"/>
    <property type="status" value="JOINED"/>
    <property type="molecule type" value="Genomic_DNA"/>
</dbReference>
<dbReference type="EMBL" id="AJ300366">
    <property type="protein sequence ID" value="CAC18855.1"/>
    <property type="status" value="JOINED"/>
    <property type="molecule type" value="Genomic_DNA"/>
</dbReference>
<dbReference type="EMBL" id="AJ300365">
    <property type="protein sequence ID" value="CAC18855.1"/>
    <property type="status" value="JOINED"/>
    <property type="molecule type" value="Genomic_DNA"/>
</dbReference>
<dbReference type="EMBL" id="AJ300382">
    <property type="protein sequence ID" value="CAC18855.1"/>
    <property type="status" value="JOINED"/>
    <property type="molecule type" value="Genomic_DNA"/>
</dbReference>
<dbReference type="EMBL" id="AJ300381">
    <property type="protein sequence ID" value="CAC18855.1"/>
    <property type="status" value="JOINED"/>
    <property type="molecule type" value="Genomic_DNA"/>
</dbReference>
<dbReference type="EMBL" id="AJ300380">
    <property type="protein sequence ID" value="CAC18855.1"/>
    <property type="status" value="JOINED"/>
    <property type="molecule type" value="Genomic_DNA"/>
</dbReference>
<dbReference type="EMBL" id="AJ300379">
    <property type="protein sequence ID" value="CAC18855.1"/>
    <property type="status" value="JOINED"/>
    <property type="molecule type" value="Genomic_DNA"/>
</dbReference>
<dbReference type="EMBL" id="AJ300378">
    <property type="protein sequence ID" value="CAC18855.1"/>
    <property type="status" value="JOINED"/>
    <property type="molecule type" value="Genomic_DNA"/>
</dbReference>
<dbReference type="EMBL" id="AJ300377">
    <property type="protein sequence ID" value="CAC18855.1"/>
    <property type="status" value="JOINED"/>
    <property type="molecule type" value="Genomic_DNA"/>
</dbReference>
<dbReference type="EMBL" id="AJ300376">
    <property type="protein sequence ID" value="CAC18855.1"/>
    <property type="status" value="JOINED"/>
    <property type="molecule type" value="Genomic_DNA"/>
</dbReference>
<dbReference type="EMBL" id="AJ300375">
    <property type="protein sequence ID" value="CAC18855.1"/>
    <property type="status" value="JOINED"/>
    <property type="molecule type" value="Genomic_DNA"/>
</dbReference>
<dbReference type="EMBL" id="AJ300374">
    <property type="protein sequence ID" value="CAC18855.1"/>
    <property type="status" value="JOINED"/>
    <property type="molecule type" value="Genomic_DNA"/>
</dbReference>
<dbReference type="EMBL" id="AJ300399">
    <property type="protein sequence ID" value="CAC18855.1"/>
    <property type="status" value="JOINED"/>
    <property type="molecule type" value="Genomic_DNA"/>
</dbReference>
<dbReference type="EMBL" id="AJ300398">
    <property type="protein sequence ID" value="CAC18855.1"/>
    <property type="status" value="JOINED"/>
    <property type="molecule type" value="Genomic_DNA"/>
</dbReference>
<dbReference type="EMBL" id="AJ300397">
    <property type="protein sequence ID" value="CAC18855.1"/>
    <property type="status" value="JOINED"/>
    <property type="molecule type" value="Genomic_DNA"/>
</dbReference>
<dbReference type="EMBL" id="AJ300396">
    <property type="protein sequence ID" value="CAC18855.1"/>
    <property type="status" value="JOINED"/>
    <property type="molecule type" value="Genomic_DNA"/>
</dbReference>
<dbReference type="EMBL" id="AJ300395">
    <property type="protein sequence ID" value="CAC18855.1"/>
    <property type="status" value="JOINED"/>
    <property type="molecule type" value="Genomic_DNA"/>
</dbReference>
<dbReference type="EMBL" id="AJ300394">
    <property type="protein sequence ID" value="CAC18855.1"/>
    <property type="status" value="JOINED"/>
    <property type="molecule type" value="Genomic_DNA"/>
</dbReference>
<dbReference type="EMBL" id="AJ300393">
    <property type="protein sequence ID" value="CAC18855.1"/>
    <property type="status" value="JOINED"/>
    <property type="molecule type" value="Genomic_DNA"/>
</dbReference>
<dbReference type="EMBL" id="AJ300392">
    <property type="protein sequence ID" value="CAC18855.1"/>
    <property type="status" value="JOINED"/>
    <property type="molecule type" value="Genomic_DNA"/>
</dbReference>
<dbReference type="EMBL" id="AJ300391">
    <property type="protein sequence ID" value="CAC18855.1"/>
    <property type="status" value="JOINED"/>
    <property type="molecule type" value="Genomic_DNA"/>
</dbReference>
<dbReference type="EMBL" id="AJ300416">
    <property type="protein sequence ID" value="CAC18855.1"/>
    <property type="status" value="JOINED"/>
    <property type="molecule type" value="Genomic_DNA"/>
</dbReference>
<dbReference type="EMBL" id="AJ300415">
    <property type="protein sequence ID" value="CAC18855.1"/>
    <property type="status" value="JOINED"/>
    <property type="molecule type" value="Genomic_DNA"/>
</dbReference>
<dbReference type="EMBL" id="AJ300414">
    <property type="protein sequence ID" value="CAC18855.1"/>
    <property type="status" value="JOINED"/>
    <property type="molecule type" value="Genomic_DNA"/>
</dbReference>
<dbReference type="EMBL" id="AJ300413">
    <property type="protein sequence ID" value="CAC18855.1"/>
    <property type="status" value="JOINED"/>
    <property type="molecule type" value="Genomic_DNA"/>
</dbReference>
<dbReference type="EMBL" id="AJ300412">
    <property type="protein sequence ID" value="CAC18855.1"/>
    <property type="status" value="JOINED"/>
    <property type="molecule type" value="Genomic_DNA"/>
</dbReference>
<dbReference type="EMBL" id="AJ300411">
    <property type="protein sequence ID" value="CAC18855.1"/>
    <property type="status" value="JOINED"/>
    <property type="molecule type" value="Genomic_DNA"/>
</dbReference>
<dbReference type="EMBL" id="AJ300410">
    <property type="protein sequence ID" value="CAC18855.1"/>
    <property type="status" value="JOINED"/>
    <property type="molecule type" value="Genomic_DNA"/>
</dbReference>
<dbReference type="EMBL" id="AJ300409">
    <property type="protein sequence ID" value="CAC18855.1"/>
    <property type="status" value="JOINED"/>
    <property type="molecule type" value="Genomic_DNA"/>
</dbReference>
<dbReference type="EMBL" id="AJ300408">
    <property type="protein sequence ID" value="CAC18855.1"/>
    <property type="status" value="JOINED"/>
    <property type="molecule type" value="Genomic_DNA"/>
</dbReference>
<dbReference type="EMBL" id="AJ300433">
    <property type="protein sequence ID" value="CAC18855.1"/>
    <property type="status" value="JOINED"/>
    <property type="molecule type" value="Genomic_DNA"/>
</dbReference>
<dbReference type="EMBL" id="AJ300432">
    <property type="protein sequence ID" value="CAC18855.1"/>
    <property type="status" value="JOINED"/>
    <property type="molecule type" value="Genomic_DNA"/>
</dbReference>
<dbReference type="EMBL" id="AJ300431">
    <property type="protein sequence ID" value="CAC18855.1"/>
    <property type="status" value="JOINED"/>
    <property type="molecule type" value="Genomic_DNA"/>
</dbReference>
<dbReference type="EMBL" id="AJ300430">
    <property type="protein sequence ID" value="CAC18855.1"/>
    <property type="status" value="JOINED"/>
    <property type="molecule type" value="Genomic_DNA"/>
</dbReference>
<dbReference type="EMBL" id="AJ300429">
    <property type="protein sequence ID" value="CAC18855.1"/>
    <property type="status" value="JOINED"/>
    <property type="molecule type" value="Genomic_DNA"/>
</dbReference>
<dbReference type="EMBL" id="AJ300428">
    <property type="protein sequence ID" value="CAC18855.1"/>
    <property type="status" value="JOINED"/>
    <property type="molecule type" value="Genomic_DNA"/>
</dbReference>
<dbReference type="EMBL" id="AJ300427">
    <property type="protein sequence ID" value="CAC18855.1"/>
    <property type="status" value="JOINED"/>
    <property type="molecule type" value="Genomic_DNA"/>
</dbReference>
<dbReference type="EMBL" id="AJ300426">
    <property type="protein sequence ID" value="CAC18855.1"/>
    <property type="status" value="JOINED"/>
    <property type="molecule type" value="Genomic_DNA"/>
</dbReference>
<dbReference type="EMBL" id="AJ300425">
    <property type="protein sequence ID" value="CAC18855.1"/>
    <property type="status" value="JOINED"/>
    <property type="molecule type" value="Genomic_DNA"/>
</dbReference>
<dbReference type="EMBL" id="AJ300444">
    <property type="protein sequence ID" value="CAC18855.1"/>
    <property type="status" value="JOINED"/>
    <property type="molecule type" value="Genomic_DNA"/>
</dbReference>
<dbReference type="EMBL" id="AJ300443">
    <property type="protein sequence ID" value="CAC18855.1"/>
    <property type="status" value="JOINED"/>
    <property type="molecule type" value="Genomic_DNA"/>
</dbReference>
<dbReference type="EMBL" id="AJ300442">
    <property type="protein sequence ID" value="CAC18855.1"/>
    <property type="status" value="JOINED"/>
    <property type="molecule type" value="Genomic_DNA"/>
</dbReference>
<dbReference type="EMBL" id="AJ300441">
    <property type="protein sequence ID" value="CAC18855.1"/>
    <property type="status" value="JOINED"/>
    <property type="molecule type" value="Genomic_DNA"/>
</dbReference>
<dbReference type="EMBL" id="AJ300440">
    <property type="protein sequence ID" value="CAC18855.1"/>
    <property type="status" value="JOINED"/>
    <property type="molecule type" value="Genomic_DNA"/>
</dbReference>
<dbReference type="EMBL" id="AJ300439">
    <property type="protein sequence ID" value="CAC18855.1"/>
    <property type="status" value="JOINED"/>
    <property type="molecule type" value="Genomic_DNA"/>
</dbReference>
<dbReference type="EMBL" id="AJ300438">
    <property type="protein sequence ID" value="CAC18855.1"/>
    <property type="status" value="JOINED"/>
    <property type="molecule type" value="Genomic_DNA"/>
</dbReference>
<dbReference type="EMBL" id="AJ300437">
    <property type="protein sequence ID" value="CAC18855.1"/>
    <property type="status" value="JOINED"/>
    <property type="molecule type" value="Genomic_DNA"/>
</dbReference>
<dbReference type="EMBL" id="AJ300436">
    <property type="protein sequence ID" value="CAC18855.1"/>
    <property type="status" value="JOINED"/>
    <property type="molecule type" value="Genomic_DNA"/>
</dbReference>
<dbReference type="EMBL" id="AJ300435">
    <property type="protein sequence ID" value="CAC18855.1"/>
    <property type="status" value="JOINED"/>
    <property type="molecule type" value="Genomic_DNA"/>
</dbReference>
<dbReference type="EMBL" id="AJ300434">
    <property type="protein sequence ID" value="CAC18855.1"/>
    <property type="status" value="JOINED"/>
    <property type="molecule type" value="Genomic_DNA"/>
</dbReference>
<dbReference type="EMBL" id="AJ300424">
    <property type="protein sequence ID" value="CAC18855.1"/>
    <property type="status" value="JOINED"/>
    <property type="molecule type" value="Genomic_DNA"/>
</dbReference>
<dbReference type="EMBL" id="AJ300423">
    <property type="protein sequence ID" value="CAC18855.1"/>
    <property type="status" value="JOINED"/>
    <property type="molecule type" value="Genomic_DNA"/>
</dbReference>
<dbReference type="EMBL" id="AJ300422">
    <property type="protein sequence ID" value="CAC18855.1"/>
    <property type="status" value="JOINED"/>
    <property type="molecule type" value="Genomic_DNA"/>
</dbReference>
<dbReference type="EMBL" id="AJ300421">
    <property type="protein sequence ID" value="CAC18855.1"/>
    <property type="status" value="JOINED"/>
    <property type="molecule type" value="Genomic_DNA"/>
</dbReference>
<dbReference type="EMBL" id="AJ300420">
    <property type="protein sequence ID" value="CAC18855.1"/>
    <property type="status" value="JOINED"/>
    <property type="molecule type" value="Genomic_DNA"/>
</dbReference>
<dbReference type="EMBL" id="AJ300419">
    <property type="protein sequence ID" value="CAC18855.1"/>
    <property type="status" value="JOINED"/>
    <property type="molecule type" value="Genomic_DNA"/>
</dbReference>
<dbReference type="EMBL" id="AJ300418">
    <property type="protein sequence ID" value="CAC18855.1"/>
    <property type="status" value="JOINED"/>
    <property type="molecule type" value="Genomic_DNA"/>
</dbReference>
<dbReference type="EMBL" id="AJ300417">
    <property type="protein sequence ID" value="CAC18855.1"/>
    <property type="status" value="JOINED"/>
    <property type="molecule type" value="Genomic_DNA"/>
</dbReference>
<dbReference type="EMBL" id="AJ300407">
    <property type="protein sequence ID" value="CAC18855.1"/>
    <property type="status" value="JOINED"/>
    <property type="molecule type" value="Genomic_DNA"/>
</dbReference>
<dbReference type="EMBL" id="AJ300406">
    <property type="protein sequence ID" value="CAC18855.1"/>
    <property type="status" value="JOINED"/>
    <property type="molecule type" value="Genomic_DNA"/>
</dbReference>
<dbReference type="EMBL" id="AJ300405">
    <property type="protein sequence ID" value="CAC18855.1"/>
    <property type="status" value="JOINED"/>
    <property type="molecule type" value="Genomic_DNA"/>
</dbReference>
<dbReference type="EMBL" id="AJ300404">
    <property type="protein sequence ID" value="CAC18855.1"/>
    <property type="status" value="JOINED"/>
    <property type="molecule type" value="Genomic_DNA"/>
</dbReference>
<dbReference type="EMBL" id="AJ300403">
    <property type="protein sequence ID" value="CAC18855.1"/>
    <property type="status" value="JOINED"/>
    <property type="molecule type" value="Genomic_DNA"/>
</dbReference>
<dbReference type="EMBL" id="AJ300402">
    <property type="protein sequence ID" value="CAC18855.1"/>
    <property type="status" value="JOINED"/>
    <property type="molecule type" value="Genomic_DNA"/>
</dbReference>
<dbReference type="EMBL" id="AJ300401">
    <property type="protein sequence ID" value="CAC18855.1"/>
    <property type="status" value="JOINED"/>
    <property type="molecule type" value="Genomic_DNA"/>
</dbReference>
<dbReference type="EMBL" id="AJ300400">
    <property type="protein sequence ID" value="CAC18855.1"/>
    <property type="status" value="JOINED"/>
    <property type="molecule type" value="Genomic_DNA"/>
</dbReference>
<dbReference type="EMBL" id="AJ300390">
    <property type="protein sequence ID" value="CAC18855.1"/>
    <property type="status" value="JOINED"/>
    <property type="molecule type" value="Genomic_DNA"/>
</dbReference>
<dbReference type="EMBL" id="AJ300389">
    <property type="protein sequence ID" value="CAC18855.1"/>
    <property type="status" value="JOINED"/>
    <property type="molecule type" value="Genomic_DNA"/>
</dbReference>
<dbReference type="EMBL" id="AJ300388">
    <property type="protein sequence ID" value="CAC18855.1"/>
    <property type="status" value="JOINED"/>
    <property type="molecule type" value="Genomic_DNA"/>
</dbReference>
<dbReference type="EMBL" id="AJ300387">
    <property type="protein sequence ID" value="CAC18855.1"/>
    <property type="status" value="JOINED"/>
    <property type="molecule type" value="Genomic_DNA"/>
</dbReference>
<dbReference type="EMBL" id="AJ300386">
    <property type="protein sequence ID" value="CAC18855.1"/>
    <property type="status" value="JOINED"/>
    <property type="molecule type" value="Genomic_DNA"/>
</dbReference>
<dbReference type="EMBL" id="AJ300385">
    <property type="protein sequence ID" value="CAC18855.1"/>
    <property type="status" value="JOINED"/>
    <property type="molecule type" value="Genomic_DNA"/>
</dbReference>
<dbReference type="EMBL" id="AJ300384">
    <property type="protein sequence ID" value="CAC18855.1"/>
    <property type="status" value="JOINED"/>
    <property type="molecule type" value="Genomic_DNA"/>
</dbReference>
<dbReference type="EMBL" id="AJ300383">
    <property type="protein sequence ID" value="CAC18855.1"/>
    <property type="status" value="JOINED"/>
    <property type="molecule type" value="Genomic_DNA"/>
</dbReference>
<dbReference type="EMBL" id="AJ300354">
    <property type="protein sequence ID" value="CAC18855.1"/>
    <property type="status" value="JOINED"/>
    <property type="molecule type" value="Genomic_DNA"/>
</dbReference>
<dbReference type="EMBL" id="AJ300352">
    <property type="protein sequence ID" value="CAC18855.1"/>
    <property type="status" value="JOINED"/>
    <property type="molecule type" value="Genomic_DNA"/>
</dbReference>
<dbReference type="EMBL" id="AJ300350">
    <property type="protein sequence ID" value="CAC18855.1"/>
    <property type="status" value="JOINED"/>
    <property type="molecule type" value="Genomic_DNA"/>
</dbReference>
<dbReference type="EMBL" id="AJ300348">
    <property type="protein sequence ID" value="CAC18855.1"/>
    <property type="status" value="JOINED"/>
    <property type="molecule type" value="Genomic_DNA"/>
</dbReference>
<dbReference type="EMBL" id="AJ300346">
    <property type="protein sequence ID" value="CAC18855.1"/>
    <property type="status" value="JOINED"/>
    <property type="molecule type" value="Genomic_DNA"/>
</dbReference>
<dbReference type="EMBL" id="AJ300345">
    <property type="protein sequence ID" value="CAC18855.1"/>
    <property type="status" value="JOINED"/>
    <property type="molecule type" value="Genomic_DNA"/>
</dbReference>
<dbReference type="EMBL" id="AJ300344">
    <property type="protein sequence ID" value="CAC18855.1"/>
    <property type="status" value="JOINED"/>
    <property type="molecule type" value="Genomic_DNA"/>
</dbReference>
<dbReference type="EMBL" id="AL365332">
    <property type="protein sequence ID" value="CAH71369.1"/>
    <property type="status" value="ALT_SEQ"/>
    <property type="molecule type" value="Genomic_DNA"/>
</dbReference>
<dbReference type="EMBL" id="AL356773">
    <property type="protein sequence ID" value="CAH71369.1"/>
    <property type="status" value="JOINED"/>
    <property type="molecule type" value="Genomic_DNA"/>
</dbReference>
<dbReference type="EMBL" id="AL359924">
    <property type="protein sequence ID" value="CAH71369.1"/>
    <property type="status" value="JOINED"/>
    <property type="molecule type" value="Genomic_DNA"/>
</dbReference>
<dbReference type="EMBL" id="AL391809">
    <property type="protein sequence ID" value="CAH71369.1"/>
    <property type="status" value="JOINED"/>
    <property type="molecule type" value="Genomic_DNA"/>
</dbReference>
<dbReference type="EMBL" id="AL442065">
    <property type="protein sequence ID" value="CAH71369.1"/>
    <property type="status" value="JOINED"/>
    <property type="molecule type" value="Genomic_DNA"/>
</dbReference>
<dbReference type="EMBL" id="AL445473">
    <property type="protein sequence ID" value="CAH71369.1"/>
    <property type="status" value="JOINED"/>
    <property type="molecule type" value="Genomic_DNA"/>
</dbReference>
<dbReference type="EMBL" id="AL513130">
    <property type="protein sequence ID" value="CAH71369.1"/>
    <property type="status" value="JOINED"/>
    <property type="molecule type" value="Genomic_DNA"/>
</dbReference>
<dbReference type="EMBL" id="AL445473">
    <property type="protein sequence ID" value="CAH71393.1"/>
    <property type="status" value="ALT_SEQ"/>
    <property type="molecule type" value="Genomic_DNA"/>
</dbReference>
<dbReference type="EMBL" id="AL356773">
    <property type="protein sequence ID" value="CAH71393.1"/>
    <property type="status" value="JOINED"/>
    <property type="molecule type" value="Genomic_DNA"/>
</dbReference>
<dbReference type="EMBL" id="AL359924">
    <property type="protein sequence ID" value="CAH71393.1"/>
    <property type="status" value="JOINED"/>
    <property type="molecule type" value="Genomic_DNA"/>
</dbReference>
<dbReference type="EMBL" id="AL365332">
    <property type="protein sequence ID" value="CAH71393.1"/>
    <property type="status" value="JOINED"/>
    <property type="molecule type" value="Genomic_DNA"/>
</dbReference>
<dbReference type="EMBL" id="AL391809">
    <property type="protein sequence ID" value="CAH71393.1"/>
    <property type="status" value="JOINED"/>
    <property type="molecule type" value="Genomic_DNA"/>
</dbReference>
<dbReference type="EMBL" id="AL442065">
    <property type="protein sequence ID" value="CAH71393.1"/>
    <property type="status" value="JOINED"/>
    <property type="molecule type" value="Genomic_DNA"/>
</dbReference>
<dbReference type="EMBL" id="AL513130">
    <property type="protein sequence ID" value="CAH71393.1"/>
    <property type="status" value="JOINED"/>
    <property type="molecule type" value="Genomic_DNA"/>
</dbReference>
<dbReference type="EMBL" id="AL356773">
    <property type="protein sequence ID" value="CAH73918.1"/>
    <property type="status" value="ALT_SEQ"/>
    <property type="molecule type" value="Genomic_DNA"/>
</dbReference>
<dbReference type="EMBL" id="AL359924">
    <property type="protein sequence ID" value="CAH73918.1"/>
    <property type="status" value="JOINED"/>
    <property type="molecule type" value="Genomic_DNA"/>
</dbReference>
<dbReference type="EMBL" id="AL365332">
    <property type="protein sequence ID" value="CAH73918.1"/>
    <property type="status" value="JOINED"/>
    <property type="molecule type" value="Genomic_DNA"/>
</dbReference>
<dbReference type="EMBL" id="AL391809">
    <property type="protein sequence ID" value="CAH73918.1"/>
    <property type="status" value="JOINED"/>
    <property type="molecule type" value="Genomic_DNA"/>
</dbReference>
<dbReference type="EMBL" id="AL442065">
    <property type="protein sequence ID" value="CAH73918.1"/>
    <property type="status" value="JOINED"/>
    <property type="molecule type" value="Genomic_DNA"/>
</dbReference>
<dbReference type="EMBL" id="AL445473">
    <property type="protein sequence ID" value="CAH73918.1"/>
    <property type="status" value="JOINED"/>
    <property type="molecule type" value="Genomic_DNA"/>
</dbReference>
<dbReference type="EMBL" id="AL513130">
    <property type="protein sequence ID" value="CAH73918.1"/>
    <property type="status" value="JOINED"/>
    <property type="molecule type" value="Genomic_DNA"/>
</dbReference>
<dbReference type="EMBL" id="AL391809">
    <property type="protein sequence ID" value="CAI14440.1"/>
    <property type="status" value="ALT_SEQ"/>
    <property type="molecule type" value="Genomic_DNA"/>
</dbReference>
<dbReference type="EMBL" id="AL356773">
    <property type="protein sequence ID" value="CAI14440.1"/>
    <property type="status" value="JOINED"/>
    <property type="molecule type" value="Genomic_DNA"/>
</dbReference>
<dbReference type="EMBL" id="AL359924">
    <property type="protein sequence ID" value="CAI14440.1"/>
    <property type="status" value="JOINED"/>
    <property type="molecule type" value="Genomic_DNA"/>
</dbReference>
<dbReference type="EMBL" id="AL365332">
    <property type="protein sequence ID" value="CAI14440.1"/>
    <property type="status" value="JOINED"/>
    <property type="molecule type" value="Genomic_DNA"/>
</dbReference>
<dbReference type="EMBL" id="AL442065">
    <property type="protein sequence ID" value="CAI14440.1"/>
    <property type="status" value="JOINED"/>
    <property type="molecule type" value="Genomic_DNA"/>
</dbReference>
<dbReference type="EMBL" id="AL445473">
    <property type="protein sequence ID" value="CAI14440.1"/>
    <property type="status" value="JOINED"/>
    <property type="molecule type" value="Genomic_DNA"/>
</dbReference>
<dbReference type="EMBL" id="AL513130">
    <property type="protein sequence ID" value="CAI14440.1"/>
    <property type="status" value="JOINED"/>
    <property type="molecule type" value="Genomic_DNA"/>
</dbReference>
<dbReference type="EMBL" id="AL442065">
    <property type="protein sequence ID" value="CAI15350.1"/>
    <property type="status" value="ALT_SEQ"/>
    <property type="molecule type" value="Genomic_DNA"/>
</dbReference>
<dbReference type="EMBL" id="AL356773">
    <property type="protein sequence ID" value="CAI15350.1"/>
    <property type="status" value="JOINED"/>
    <property type="molecule type" value="Genomic_DNA"/>
</dbReference>
<dbReference type="EMBL" id="AL359924">
    <property type="protein sequence ID" value="CAI15350.1"/>
    <property type="status" value="JOINED"/>
    <property type="molecule type" value="Genomic_DNA"/>
</dbReference>
<dbReference type="EMBL" id="AL365332">
    <property type="protein sequence ID" value="CAI15350.1"/>
    <property type="status" value="JOINED"/>
    <property type="molecule type" value="Genomic_DNA"/>
</dbReference>
<dbReference type="EMBL" id="AL391809">
    <property type="protein sequence ID" value="CAI15350.1"/>
    <property type="status" value="JOINED"/>
    <property type="molecule type" value="Genomic_DNA"/>
</dbReference>
<dbReference type="EMBL" id="AL445473">
    <property type="protein sequence ID" value="CAI15350.1"/>
    <property type="status" value="JOINED"/>
    <property type="molecule type" value="Genomic_DNA"/>
</dbReference>
<dbReference type="EMBL" id="AL513130">
    <property type="protein sequence ID" value="CAI15350.1"/>
    <property type="status" value="JOINED"/>
    <property type="molecule type" value="Genomic_DNA"/>
</dbReference>
<dbReference type="EMBL" id="AL513130">
    <property type="protein sequence ID" value="CAI15936.1"/>
    <property type="status" value="ALT_SEQ"/>
    <property type="molecule type" value="Genomic_DNA"/>
</dbReference>
<dbReference type="EMBL" id="AL356773">
    <property type="protein sequence ID" value="CAI15936.1"/>
    <property type="status" value="JOINED"/>
    <property type="molecule type" value="Genomic_DNA"/>
</dbReference>
<dbReference type="EMBL" id="AL359924">
    <property type="protein sequence ID" value="CAI15936.1"/>
    <property type="status" value="JOINED"/>
    <property type="molecule type" value="Genomic_DNA"/>
</dbReference>
<dbReference type="EMBL" id="AL365332">
    <property type="protein sequence ID" value="CAI15936.1"/>
    <property type="status" value="JOINED"/>
    <property type="molecule type" value="Genomic_DNA"/>
</dbReference>
<dbReference type="EMBL" id="AL391809">
    <property type="protein sequence ID" value="CAI15936.1"/>
    <property type="status" value="JOINED"/>
    <property type="molecule type" value="Genomic_DNA"/>
</dbReference>
<dbReference type="EMBL" id="AL442065">
    <property type="protein sequence ID" value="CAI15936.1"/>
    <property type="status" value="JOINED"/>
    <property type="molecule type" value="Genomic_DNA"/>
</dbReference>
<dbReference type="EMBL" id="AL445473">
    <property type="protein sequence ID" value="CAI15936.1"/>
    <property type="status" value="JOINED"/>
    <property type="molecule type" value="Genomic_DNA"/>
</dbReference>
<dbReference type="EMBL" id="AL359924">
    <property type="protein sequence ID" value="CAI22065.1"/>
    <property type="status" value="ALT_SEQ"/>
    <property type="molecule type" value="Genomic_DNA"/>
</dbReference>
<dbReference type="EMBL" id="AL356773">
    <property type="protein sequence ID" value="CAI22065.1"/>
    <property type="status" value="JOINED"/>
    <property type="molecule type" value="Genomic_DNA"/>
</dbReference>
<dbReference type="EMBL" id="AL365332">
    <property type="protein sequence ID" value="CAI22065.1"/>
    <property type="status" value="JOINED"/>
    <property type="molecule type" value="Genomic_DNA"/>
</dbReference>
<dbReference type="EMBL" id="AL391809">
    <property type="protein sequence ID" value="CAI22065.1"/>
    <property type="status" value="JOINED"/>
    <property type="molecule type" value="Genomic_DNA"/>
</dbReference>
<dbReference type="EMBL" id="AL442065">
    <property type="protein sequence ID" value="CAI22065.1"/>
    <property type="status" value="JOINED"/>
    <property type="molecule type" value="Genomic_DNA"/>
</dbReference>
<dbReference type="EMBL" id="AL445473">
    <property type="protein sequence ID" value="CAI22065.1"/>
    <property type="status" value="JOINED"/>
    <property type="molecule type" value="Genomic_DNA"/>
</dbReference>
<dbReference type="EMBL" id="AL513130">
    <property type="protein sequence ID" value="CAI22065.1"/>
    <property type="status" value="JOINED"/>
    <property type="molecule type" value="Genomic_DNA"/>
</dbReference>
<dbReference type="EMBL" id="Y08218">
    <property type="protein sequence ID" value="CAA69395.1"/>
    <property type="molecule type" value="mRNA"/>
</dbReference>
<dbReference type="EMBL" id="X91869">
    <property type="protein sequence ID" value="CAA62975.1"/>
    <property type="molecule type" value="mRNA"/>
</dbReference>
<dbReference type="EMBL" id="AJ002511">
    <property type="protein sequence ID" value="CAA05502.1"/>
    <property type="molecule type" value="mRNA"/>
</dbReference>
<dbReference type="CCDS" id="CCDS55691.1">
    <molecule id="Q92736-1"/>
</dbReference>
<dbReference type="PIR" id="S72269">
    <property type="entry name" value="S72269"/>
</dbReference>
<dbReference type="RefSeq" id="NP_001026.2">
    <molecule id="Q92736-1"/>
    <property type="nucleotide sequence ID" value="NM_001035.3"/>
</dbReference>
<dbReference type="RefSeq" id="XP_006711868.1">
    <molecule id="Q92736-2"/>
    <property type="nucleotide sequence ID" value="XM_006711805.4"/>
</dbReference>
<dbReference type="RefSeq" id="XP_054194071.1">
    <molecule id="Q92736-2"/>
    <property type="nucleotide sequence ID" value="XM_054338096.1"/>
</dbReference>
<dbReference type="PDB" id="4JKQ">
    <property type="method" value="X-ray"/>
    <property type="resolution" value="2.39 A"/>
    <property type="chains" value="A=1-606"/>
</dbReference>
<dbReference type="PDB" id="6Y4O">
    <property type="method" value="X-ray"/>
    <property type="resolution" value="1.84 A"/>
    <property type="chains" value="B=3581-3607"/>
</dbReference>
<dbReference type="PDB" id="6Y4P">
    <property type="method" value="X-ray"/>
    <property type="resolution" value="2.13 A"/>
    <property type="chains" value="B=3581-3607"/>
</dbReference>
<dbReference type="PDB" id="7KL5">
    <property type="method" value="X-ray"/>
    <property type="resolution" value="1.65 A"/>
    <property type="chains" value="B=4246-4275"/>
</dbReference>
<dbReference type="PDB" id="7U9Q">
    <property type="method" value="EM"/>
    <property type="resolution" value="3.11 A"/>
    <property type="chains" value="A/B/C/D=1-4967"/>
</dbReference>
<dbReference type="PDB" id="7U9R">
    <property type="method" value="EM"/>
    <property type="resolution" value="3.69 A"/>
    <property type="chains" value="A/B/C/D=1-4967"/>
</dbReference>
<dbReference type="PDB" id="7U9T">
    <property type="method" value="EM"/>
    <property type="resolution" value="2.68 A"/>
    <property type="chains" value="A/B/C/D=1-4967"/>
</dbReference>
<dbReference type="PDB" id="7U9X">
    <property type="method" value="EM"/>
    <property type="resolution" value="2.58 A"/>
    <property type="chains" value="A/B/C/D=1-4967"/>
</dbReference>
<dbReference type="PDB" id="7U9Z">
    <property type="method" value="EM"/>
    <property type="resolution" value="3.29 A"/>
    <property type="chains" value="A/B/C/D=1-4967"/>
</dbReference>
<dbReference type="PDB" id="7UA1">
    <property type="method" value="EM"/>
    <property type="resolution" value="2.99 A"/>
    <property type="chains" value="A/B/C/D=1-4967"/>
</dbReference>
<dbReference type="PDB" id="7UA3">
    <property type="method" value="EM"/>
    <property type="resolution" value="2.97 A"/>
    <property type="chains" value="A/B/C/D=1-4967"/>
</dbReference>
<dbReference type="PDB" id="7UA4">
    <property type="method" value="EM"/>
    <property type="resolution" value="2.93 A"/>
    <property type="chains" value="A/B/C/D=1-4967"/>
</dbReference>
<dbReference type="PDB" id="7UA5">
    <property type="method" value="EM"/>
    <property type="resolution" value="2.83 A"/>
    <property type="chains" value="A/B/C/D=1-4967"/>
</dbReference>
<dbReference type="PDB" id="7UA9">
    <property type="method" value="EM"/>
    <property type="resolution" value="3.59 A"/>
    <property type="chains" value="A/B/C/D=1-4967"/>
</dbReference>
<dbReference type="PDB" id="8UQ2">
    <property type="method" value="EM"/>
    <property type="resolution" value="2.98 A"/>
    <property type="chains" value="A/B/C/D=1-4967"/>
</dbReference>
<dbReference type="PDB" id="8UQ3">
    <property type="method" value="EM"/>
    <property type="resolution" value="3.18 A"/>
    <property type="chains" value="A/B/C/D=1-4967"/>
</dbReference>
<dbReference type="PDB" id="8UQ4">
    <property type="method" value="EM"/>
    <property type="resolution" value="3.64 A"/>
    <property type="chains" value="A/B/C/D=1-4967"/>
</dbReference>
<dbReference type="PDB" id="8UQ5">
    <property type="method" value="EM"/>
    <property type="resolution" value="3.96 A"/>
    <property type="chains" value="A/B/C/D=1-4967"/>
</dbReference>
<dbReference type="PDB" id="8UXC">
    <property type="method" value="EM"/>
    <property type="resolution" value="2.86 A"/>
    <property type="chains" value="A/B/C/D=1-4967"/>
</dbReference>
<dbReference type="PDB" id="8UXE">
    <property type="method" value="EM"/>
    <property type="resolution" value="3.53 A"/>
    <property type="chains" value="A/B/C/D=1-4967"/>
</dbReference>
<dbReference type="PDB" id="8UXF">
    <property type="method" value="EM"/>
    <property type="resolution" value="3.13 A"/>
    <property type="chains" value="A/B/C/D=1-4967"/>
</dbReference>
<dbReference type="PDB" id="8UXG">
    <property type="method" value="EM"/>
    <property type="resolution" value="3.08 A"/>
    <property type="chains" value="A/B/C/D=1-4967"/>
</dbReference>
<dbReference type="PDB" id="8UXH">
    <property type="method" value="EM"/>
    <property type="resolution" value="3.52 A"/>
    <property type="chains" value="A/B/C/D=1-4967"/>
</dbReference>
<dbReference type="PDB" id="8UXI">
    <property type="method" value="EM"/>
    <property type="resolution" value="3.29 A"/>
    <property type="chains" value="A/B/C/D=1-4967"/>
</dbReference>
<dbReference type="PDB" id="8UXL">
    <property type="method" value="EM"/>
    <property type="resolution" value="3.12 A"/>
    <property type="chains" value="A/B/C/D=1-4967"/>
</dbReference>
<dbReference type="PDB" id="8UXM">
    <property type="method" value="EM"/>
    <property type="resolution" value="3.56 A"/>
    <property type="chains" value="A/B/C/D=1-4967"/>
</dbReference>
<dbReference type="PDBsum" id="4JKQ"/>
<dbReference type="PDBsum" id="6Y4O"/>
<dbReference type="PDBsum" id="6Y4P"/>
<dbReference type="PDBsum" id="7KL5"/>
<dbReference type="PDBsum" id="7U9Q"/>
<dbReference type="PDBsum" id="7U9R"/>
<dbReference type="PDBsum" id="7U9T"/>
<dbReference type="PDBsum" id="7U9X"/>
<dbReference type="PDBsum" id="7U9Z"/>
<dbReference type="PDBsum" id="7UA1"/>
<dbReference type="PDBsum" id="7UA3"/>
<dbReference type="PDBsum" id="7UA4"/>
<dbReference type="PDBsum" id="7UA5"/>
<dbReference type="PDBsum" id="7UA9"/>
<dbReference type="PDBsum" id="8UQ2"/>
<dbReference type="PDBsum" id="8UQ3"/>
<dbReference type="PDBsum" id="8UQ4"/>
<dbReference type="PDBsum" id="8UQ5"/>
<dbReference type="PDBsum" id="8UXC"/>
<dbReference type="PDBsum" id="8UXE"/>
<dbReference type="PDBsum" id="8UXF"/>
<dbReference type="PDBsum" id="8UXG"/>
<dbReference type="PDBsum" id="8UXH"/>
<dbReference type="PDBsum" id="8UXI"/>
<dbReference type="PDBsum" id="8UXL"/>
<dbReference type="PDBsum" id="8UXM"/>
<dbReference type="BMRB" id="Q92736"/>
<dbReference type="EMDB" id="EMD-26139"/>
<dbReference type="EMDB" id="EMD-26405"/>
<dbReference type="EMDB" id="EMD-26407"/>
<dbReference type="EMDB" id="EMD-26408"/>
<dbReference type="EMDB" id="EMD-26409"/>
<dbReference type="EMDB" id="EMD-26410"/>
<dbReference type="EMDB" id="EMD-26412"/>
<dbReference type="EMDB" id="EMD-26413"/>
<dbReference type="EMDB" id="EMD-26414"/>
<dbReference type="EMDB" id="EMD-26415"/>
<dbReference type="EMDB" id="EMD-26416"/>
<dbReference type="EMDB" id="EMD-42458"/>
<dbReference type="EMDB" id="EMD-42459"/>
<dbReference type="EMDB" id="EMD-42460"/>
<dbReference type="EMDB" id="EMD-42461"/>
<dbReference type="EMDB" id="EMD-42759"/>
<dbReference type="EMDB" id="EMD-42761"/>
<dbReference type="EMDB" id="EMD-42762"/>
<dbReference type="EMDB" id="EMD-42763"/>
<dbReference type="EMDB" id="EMD-42764"/>
<dbReference type="EMDB" id="EMD-42765"/>
<dbReference type="EMDB" id="EMD-42768"/>
<dbReference type="EMDB" id="EMD-42769"/>
<dbReference type="SMR" id="Q92736"/>
<dbReference type="BioGRID" id="112174">
    <property type="interactions" value="50"/>
</dbReference>
<dbReference type="ComplexPortal" id="CPX-3156">
    <property type="entry name" value="Ryanodine 2 complex"/>
</dbReference>
<dbReference type="CORUM" id="Q92736"/>
<dbReference type="DIP" id="DIP-38325N"/>
<dbReference type="FunCoup" id="Q92736">
    <property type="interactions" value="1364"/>
</dbReference>
<dbReference type="IntAct" id="Q92736">
    <property type="interactions" value="16"/>
</dbReference>
<dbReference type="MINT" id="Q92736"/>
<dbReference type="STRING" id="9606.ENSP00000355533"/>
<dbReference type="BindingDB" id="Q92736"/>
<dbReference type="ChEMBL" id="CHEMBL4403"/>
<dbReference type="DrugBank" id="DB11093">
    <property type="generic name" value="Calcium citrate"/>
</dbReference>
<dbReference type="DrugBank" id="DB11348">
    <property type="generic name" value="Calcium Phosphate"/>
</dbReference>
<dbReference type="DrugBank" id="DB14481">
    <property type="generic name" value="Calcium phosphate dihydrate"/>
</dbReference>
<dbReference type="DrugBank" id="DB01195">
    <property type="generic name" value="Flecainide"/>
</dbReference>
<dbReference type="DrugBank" id="DB09085">
    <property type="generic name" value="Tetracaine"/>
</dbReference>
<dbReference type="DrugCentral" id="Q92736"/>
<dbReference type="GuidetoPHARMACOLOGY" id="748"/>
<dbReference type="TCDB" id="1.A.3.1.1">
    <property type="family name" value="the ryanodine-inositol 1,4,5-triphosphate receptor ca(2+) channel (rir-cac) family"/>
</dbReference>
<dbReference type="CarbonylDB" id="Q92736"/>
<dbReference type="GlyCosmos" id="Q92736">
    <property type="glycosylation" value="1 site, 1 glycan"/>
</dbReference>
<dbReference type="GlyGen" id="Q92736">
    <property type="glycosylation" value="5 sites, 1 N-linked glycan (1 site), 1 O-linked glycan (3 sites)"/>
</dbReference>
<dbReference type="iPTMnet" id="Q92736"/>
<dbReference type="PhosphoSitePlus" id="Q92736"/>
<dbReference type="SwissPalm" id="Q92736"/>
<dbReference type="BioMuta" id="RYR2"/>
<dbReference type="DMDM" id="308153558"/>
<dbReference type="jPOST" id="Q92736"/>
<dbReference type="MassIVE" id="Q92736"/>
<dbReference type="PaxDb" id="9606-ENSP00000355533"/>
<dbReference type="PeptideAtlas" id="Q92736"/>
<dbReference type="ProteomicsDB" id="75431">
    <molecule id="Q92736-1"/>
</dbReference>
<dbReference type="ProteomicsDB" id="75432">
    <molecule id="Q92736-2"/>
</dbReference>
<dbReference type="Pumba" id="Q92736"/>
<dbReference type="Antibodypedia" id="3476">
    <property type="antibodies" value="255 antibodies from 32 providers"/>
</dbReference>
<dbReference type="DNASU" id="6262"/>
<dbReference type="Ensembl" id="ENST00000366574.7">
    <molecule id="Q92736-1"/>
    <property type="protein sequence ID" value="ENSP00000355533.2"/>
    <property type="gene ID" value="ENSG00000198626.19"/>
</dbReference>
<dbReference type="GeneID" id="6262"/>
<dbReference type="KEGG" id="hsa:6262"/>
<dbReference type="MANE-Select" id="ENST00000366574.7">
    <property type="protein sequence ID" value="ENSP00000355533.2"/>
    <property type="RefSeq nucleotide sequence ID" value="NM_001035.3"/>
    <property type="RefSeq protein sequence ID" value="NP_001026.2"/>
</dbReference>
<dbReference type="UCSC" id="uc001hyl.2">
    <molecule id="Q92736-1"/>
    <property type="organism name" value="human"/>
</dbReference>
<dbReference type="AGR" id="HGNC:10484"/>
<dbReference type="CTD" id="6262"/>
<dbReference type="DisGeNET" id="6262"/>
<dbReference type="GeneCards" id="RYR2"/>
<dbReference type="GeneReviews" id="RYR2"/>
<dbReference type="HGNC" id="HGNC:10484">
    <property type="gene designation" value="RYR2"/>
</dbReference>
<dbReference type="HPA" id="ENSG00000198626">
    <property type="expression patterns" value="Tissue enriched (heart)"/>
</dbReference>
<dbReference type="MalaCards" id="RYR2"/>
<dbReference type="MIM" id="115000">
    <property type="type" value="phenotype"/>
</dbReference>
<dbReference type="MIM" id="180902">
    <property type="type" value="gene"/>
</dbReference>
<dbReference type="MIM" id="604772">
    <property type="type" value="phenotype"/>
</dbReference>
<dbReference type="neXtProt" id="NX_Q92736"/>
<dbReference type="OpenTargets" id="ENSG00000198626"/>
<dbReference type="Orphanet" id="3286">
    <property type="disease" value="Catecholaminergic polymorphic ventricular tachycardia"/>
</dbReference>
<dbReference type="Orphanet" id="293888">
    <property type="disease" value="Inherited isolated arrhythmogenic cardiomyopathy, dominant-left variant"/>
</dbReference>
<dbReference type="Orphanet" id="293910">
    <property type="disease" value="Inherited isolated arrhythmogenic cardiomyopathy, dominant-right variant"/>
</dbReference>
<dbReference type="Orphanet" id="293899">
    <property type="disease" value="Inherited isolated arrhythmogenic ventricular dysplasia, biventricular variant"/>
</dbReference>
<dbReference type="VEuPathDB" id="HostDB:ENSG00000198626"/>
<dbReference type="eggNOG" id="KOG2243">
    <property type="taxonomic scope" value="Eukaryota"/>
</dbReference>
<dbReference type="GeneTree" id="ENSGT00940000154906"/>
<dbReference type="HOGENOM" id="CLU_000040_2_0_1"/>
<dbReference type="InParanoid" id="Q92736"/>
<dbReference type="OMA" id="HYEDTSD"/>
<dbReference type="OrthoDB" id="258495at2759"/>
<dbReference type="PAN-GO" id="Q92736">
    <property type="GO annotations" value="10 GO annotations based on evolutionary models"/>
</dbReference>
<dbReference type="PhylomeDB" id="Q92736"/>
<dbReference type="TreeFam" id="TF315244"/>
<dbReference type="PathwayCommons" id="Q92736"/>
<dbReference type="Reactome" id="R-HSA-2672351">
    <property type="pathway name" value="Stimuli-sensing channels"/>
</dbReference>
<dbReference type="Reactome" id="R-HSA-5578775">
    <property type="pathway name" value="Ion homeostasis"/>
</dbReference>
<dbReference type="SignaLink" id="Q92736"/>
<dbReference type="SIGNOR" id="Q92736"/>
<dbReference type="BioGRID-ORCS" id="6262">
    <property type="hits" value="7 hits in 1152 CRISPR screens"/>
</dbReference>
<dbReference type="CD-CODE" id="FB4E32DD">
    <property type="entry name" value="Presynaptic clusters and postsynaptic densities"/>
</dbReference>
<dbReference type="ChiTaRS" id="RYR2">
    <property type="organism name" value="human"/>
</dbReference>
<dbReference type="EvolutionaryTrace" id="Q92736"/>
<dbReference type="GeneWiki" id="Ryanodine_receptor_2"/>
<dbReference type="GenomeRNAi" id="6262"/>
<dbReference type="Pharos" id="Q92736">
    <property type="development level" value="Tclin"/>
</dbReference>
<dbReference type="PRO" id="PR:Q92736"/>
<dbReference type="Proteomes" id="UP000005640">
    <property type="component" value="Chromosome 1"/>
</dbReference>
<dbReference type="RNAct" id="Q92736">
    <property type="molecule type" value="protein"/>
</dbReference>
<dbReference type="Bgee" id="ENSG00000198626">
    <property type="expression patterns" value="Expressed in heart right ventricle and 139 other cell types or tissues"/>
</dbReference>
<dbReference type="ExpressionAtlas" id="Q92736">
    <property type="expression patterns" value="baseline and differential"/>
</dbReference>
<dbReference type="GO" id="GO:0034704">
    <property type="term" value="C:calcium channel complex"/>
    <property type="evidence" value="ECO:0000314"/>
    <property type="project" value="BHF-UCL"/>
</dbReference>
<dbReference type="GO" id="GO:0014701">
    <property type="term" value="C:junctional sarcoplasmic reticulum membrane"/>
    <property type="evidence" value="ECO:0000304"/>
    <property type="project" value="BHF-UCL"/>
</dbReference>
<dbReference type="GO" id="GO:0016020">
    <property type="term" value="C:membrane"/>
    <property type="evidence" value="ECO:0000314"/>
    <property type="project" value="BHF-UCL"/>
</dbReference>
<dbReference type="GO" id="GO:0005886">
    <property type="term" value="C:plasma membrane"/>
    <property type="evidence" value="ECO:0000250"/>
    <property type="project" value="BHF-UCL"/>
</dbReference>
<dbReference type="GO" id="GO:0032991">
    <property type="term" value="C:protein-containing complex"/>
    <property type="evidence" value="ECO:0000314"/>
    <property type="project" value="MGI"/>
</dbReference>
<dbReference type="GO" id="GO:0042383">
    <property type="term" value="C:sarcolemma"/>
    <property type="evidence" value="ECO:0000318"/>
    <property type="project" value="GO_Central"/>
</dbReference>
<dbReference type="GO" id="GO:0016529">
    <property type="term" value="C:sarcoplasmic reticulum"/>
    <property type="evidence" value="ECO:0000314"/>
    <property type="project" value="BHF-UCL"/>
</dbReference>
<dbReference type="GO" id="GO:0033017">
    <property type="term" value="C:sarcoplasmic reticulum membrane"/>
    <property type="evidence" value="ECO:0000250"/>
    <property type="project" value="UniProtKB"/>
</dbReference>
<dbReference type="GO" id="GO:0005790">
    <property type="term" value="C:smooth endoplasmic reticulum"/>
    <property type="evidence" value="ECO:0000318"/>
    <property type="project" value="GO_Central"/>
</dbReference>
<dbReference type="GO" id="GO:0030018">
    <property type="term" value="C:Z disc"/>
    <property type="evidence" value="ECO:0000314"/>
    <property type="project" value="BHF-UCL"/>
</dbReference>
<dbReference type="GO" id="GO:0005262">
    <property type="term" value="F:calcium channel activity"/>
    <property type="evidence" value="ECO:0000250"/>
    <property type="project" value="UniProtKB"/>
</dbReference>
<dbReference type="GO" id="GO:0005509">
    <property type="term" value="F:calcium ion binding"/>
    <property type="evidence" value="ECO:0007669"/>
    <property type="project" value="InterPro"/>
</dbReference>
<dbReference type="GO" id="GO:0048763">
    <property type="term" value="F:calcium-induced calcium release activity"/>
    <property type="evidence" value="ECO:0000314"/>
    <property type="project" value="BHF-UCL"/>
</dbReference>
<dbReference type="GO" id="GO:0005516">
    <property type="term" value="F:calmodulin binding"/>
    <property type="evidence" value="ECO:0000314"/>
    <property type="project" value="UniProtKB"/>
</dbReference>
<dbReference type="GO" id="GO:0019899">
    <property type="term" value="F:enzyme binding"/>
    <property type="evidence" value="ECO:0000353"/>
    <property type="project" value="BHF-UCL"/>
</dbReference>
<dbReference type="GO" id="GO:0042802">
    <property type="term" value="F:identical protein binding"/>
    <property type="evidence" value="ECO:0000353"/>
    <property type="project" value="BHF-UCL"/>
</dbReference>
<dbReference type="GO" id="GO:0015278">
    <property type="term" value="F:intracellularly gated calcium channel activity"/>
    <property type="evidence" value="ECO:0000314"/>
    <property type="project" value="BHF-UCL"/>
</dbReference>
<dbReference type="GO" id="GO:0034236">
    <property type="term" value="F:protein kinase A catalytic subunit binding"/>
    <property type="evidence" value="ECO:0000314"/>
    <property type="project" value="BHF-UCL"/>
</dbReference>
<dbReference type="GO" id="GO:0034237">
    <property type="term" value="F:protein kinase A regulatory subunit binding"/>
    <property type="evidence" value="ECO:0000314"/>
    <property type="project" value="BHF-UCL"/>
</dbReference>
<dbReference type="GO" id="GO:0005219">
    <property type="term" value="F:ryanodine-sensitive calcium-release channel activity"/>
    <property type="evidence" value="ECO:0000314"/>
    <property type="project" value="UniProtKB"/>
</dbReference>
<dbReference type="GO" id="GO:0043924">
    <property type="term" value="F:suramin binding"/>
    <property type="evidence" value="ECO:0000315"/>
    <property type="project" value="BHF-UCL"/>
</dbReference>
<dbReference type="GO" id="GO:0044325">
    <property type="term" value="F:transmembrane transporter binding"/>
    <property type="evidence" value="ECO:0000250"/>
    <property type="project" value="BHF-UCL"/>
</dbReference>
<dbReference type="GO" id="GO:0006816">
    <property type="term" value="P:calcium ion transport"/>
    <property type="evidence" value="ECO:0000314"/>
    <property type="project" value="BHF-UCL"/>
</dbReference>
<dbReference type="GO" id="GO:0060402">
    <property type="term" value="P:calcium ion transport into cytosol"/>
    <property type="evidence" value="ECO:0000314"/>
    <property type="project" value="BHF-UCL"/>
</dbReference>
<dbReference type="GO" id="GO:0019722">
    <property type="term" value="P:calcium-mediated signaling"/>
    <property type="evidence" value="ECO:0000314"/>
    <property type="project" value="BHF-UCL"/>
</dbReference>
<dbReference type="GO" id="GO:0060048">
    <property type="term" value="P:cardiac muscle contraction"/>
    <property type="evidence" value="ECO:0000315"/>
    <property type="project" value="BHF-UCL"/>
</dbReference>
<dbReference type="GO" id="GO:0003300">
    <property type="term" value="P:cardiac muscle hypertrophy"/>
    <property type="evidence" value="ECO:0000250"/>
    <property type="project" value="BHF-UCL"/>
</dbReference>
<dbReference type="GO" id="GO:0086064">
    <property type="term" value="P:cell communication by electrical coupling involved in cardiac conduction"/>
    <property type="evidence" value="ECO:0000305"/>
    <property type="project" value="BHF-UCL"/>
</dbReference>
<dbReference type="GO" id="GO:0071313">
    <property type="term" value="P:cellular response to caffeine"/>
    <property type="evidence" value="ECO:0000314"/>
    <property type="project" value="BHF-UCL"/>
</dbReference>
<dbReference type="GO" id="GO:0071872">
    <property type="term" value="P:cellular response to epinephrine stimulus"/>
    <property type="evidence" value="ECO:0000250"/>
    <property type="project" value="BHF-UCL"/>
</dbReference>
<dbReference type="GO" id="GO:0005513">
    <property type="term" value="P:detection of calcium ion"/>
    <property type="evidence" value="ECO:0000314"/>
    <property type="project" value="BHF-UCL"/>
</dbReference>
<dbReference type="GO" id="GO:0003143">
    <property type="term" value="P:embryonic heart tube morphogenesis"/>
    <property type="evidence" value="ECO:0000250"/>
    <property type="project" value="UniProtKB"/>
</dbReference>
<dbReference type="GO" id="GO:0051649">
    <property type="term" value="P:establishment of localization in cell"/>
    <property type="evidence" value="ECO:0007669"/>
    <property type="project" value="Ensembl"/>
</dbReference>
<dbReference type="GO" id="GO:0072599">
    <property type="term" value="P:establishment of protein localization to endoplasmic reticulum"/>
    <property type="evidence" value="ECO:0000314"/>
    <property type="project" value="BHF-UCL"/>
</dbReference>
<dbReference type="GO" id="GO:0006874">
    <property type="term" value="P:intracellular calcium ion homeostasis"/>
    <property type="evidence" value="ECO:0000250"/>
    <property type="project" value="UniProtKB"/>
</dbReference>
<dbReference type="GO" id="GO:0003220">
    <property type="term" value="P:left ventricular cardiac muscle tissue morphogenesis"/>
    <property type="evidence" value="ECO:0000250"/>
    <property type="project" value="BHF-UCL"/>
</dbReference>
<dbReference type="GO" id="GO:0010460">
    <property type="term" value="P:positive regulation of heart rate"/>
    <property type="evidence" value="ECO:0000250"/>
    <property type="project" value="BHF-UCL"/>
</dbReference>
<dbReference type="GO" id="GO:0051284">
    <property type="term" value="P:positive regulation of sequestering of calcium ion"/>
    <property type="evidence" value="ECO:0000314"/>
    <property type="project" value="BHF-UCL"/>
</dbReference>
<dbReference type="GO" id="GO:0098735">
    <property type="term" value="P:positive regulation of the force of heart contraction"/>
    <property type="evidence" value="ECO:0000315"/>
    <property type="project" value="BHF-UCL"/>
</dbReference>
<dbReference type="GO" id="GO:0086029">
    <property type="term" value="P:Purkinje myocyte to ventricular cardiac muscle cell signaling"/>
    <property type="evidence" value="ECO:0000250"/>
    <property type="project" value="BHF-UCL"/>
</dbReference>
<dbReference type="GO" id="GO:0098910">
    <property type="term" value="P:regulation of atrial cardiac muscle cell action potential"/>
    <property type="evidence" value="ECO:0000315"/>
    <property type="project" value="BHF-UCL"/>
</dbReference>
<dbReference type="GO" id="GO:0098904">
    <property type="term" value="P:regulation of AV node cell action potential"/>
    <property type="evidence" value="ECO:0000315"/>
    <property type="project" value="BHF-UCL"/>
</dbReference>
<dbReference type="GO" id="GO:0055117">
    <property type="term" value="P:regulation of cardiac muscle contraction"/>
    <property type="evidence" value="ECO:0000315"/>
    <property type="project" value="BHF-UCL"/>
</dbReference>
<dbReference type="GO" id="GO:0010882">
    <property type="term" value="P:regulation of cardiac muscle contraction by calcium ion signaling"/>
    <property type="evidence" value="ECO:0000315"/>
    <property type="project" value="BHF-UCL"/>
</dbReference>
<dbReference type="GO" id="GO:0010881">
    <property type="term" value="P:regulation of cardiac muscle contraction by regulation of the release of sequestered calcium ion"/>
    <property type="evidence" value="ECO:0000314"/>
    <property type="project" value="BHF-UCL"/>
</dbReference>
<dbReference type="GO" id="GO:0051480">
    <property type="term" value="P:regulation of cytosolic calcium ion concentration"/>
    <property type="evidence" value="ECO:0000250"/>
    <property type="project" value="BHF-UCL"/>
</dbReference>
<dbReference type="GO" id="GO:0002027">
    <property type="term" value="P:regulation of heart rate"/>
    <property type="evidence" value="ECO:0000315"/>
    <property type="project" value="BHF-UCL"/>
</dbReference>
<dbReference type="GO" id="GO:0098907">
    <property type="term" value="P:regulation of SA node cell action potential"/>
    <property type="evidence" value="ECO:0000315"/>
    <property type="project" value="BHF-UCL"/>
</dbReference>
<dbReference type="GO" id="GO:0098911">
    <property type="term" value="P:regulation of ventricular cardiac muscle cell action potential"/>
    <property type="evidence" value="ECO:0000315"/>
    <property type="project" value="BHF-UCL"/>
</dbReference>
<dbReference type="GO" id="GO:0051209">
    <property type="term" value="P:release of sequestered calcium ion into cytosol"/>
    <property type="evidence" value="ECO:0000314"/>
    <property type="project" value="BHF-UCL"/>
</dbReference>
<dbReference type="GO" id="GO:0014808">
    <property type="term" value="P:release of sequestered calcium ion into cytosol by sarcoplasmic reticulum"/>
    <property type="evidence" value="ECO:0000314"/>
    <property type="project" value="UniProtKB"/>
</dbReference>
<dbReference type="GO" id="GO:0031000">
    <property type="term" value="P:response to caffeine"/>
    <property type="evidence" value="ECO:0000314"/>
    <property type="project" value="BHF-UCL"/>
</dbReference>
<dbReference type="GO" id="GO:0001666">
    <property type="term" value="P:response to hypoxia"/>
    <property type="evidence" value="ECO:0000250"/>
    <property type="project" value="BHF-UCL"/>
</dbReference>
<dbReference type="GO" id="GO:0014850">
    <property type="term" value="P:response to muscle activity"/>
    <property type="evidence" value="ECO:0000315"/>
    <property type="project" value="BHF-UCL"/>
</dbReference>
<dbReference type="GO" id="GO:0035994">
    <property type="term" value="P:response to muscle stretch"/>
    <property type="evidence" value="ECO:0000315"/>
    <property type="project" value="BHF-UCL"/>
</dbReference>
<dbReference type="GO" id="GO:0051775">
    <property type="term" value="P:response to redox state"/>
    <property type="evidence" value="ECO:0000314"/>
    <property type="project" value="BHF-UCL"/>
</dbReference>
<dbReference type="GO" id="GO:0070296">
    <property type="term" value="P:sarcoplasmic reticulum calcium ion transport"/>
    <property type="evidence" value="ECO:0000304"/>
    <property type="project" value="BHF-UCL"/>
</dbReference>
<dbReference type="GO" id="GO:0097050">
    <property type="term" value="P:type B pancreatic cell apoptotic process"/>
    <property type="evidence" value="ECO:0000315"/>
    <property type="project" value="BHF-UCL"/>
</dbReference>
<dbReference type="GO" id="GO:0086005">
    <property type="term" value="P:ventricular cardiac muscle cell action potential"/>
    <property type="evidence" value="ECO:0000250"/>
    <property type="project" value="BHF-UCL"/>
</dbReference>
<dbReference type="CDD" id="cd23291">
    <property type="entry name" value="beta-trefoil_MIR_RyR2"/>
    <property type="match status" value="1"/>
</dbReference>
<dbReference type="CDD" id="cd12877">
    <property type="entry name" value="SPRY1_RyR"/>
    <property type="match status" value="1"/>
</dbReference>
<dbReference type="CDD" id="cd12878">
    <property type="entry name" value="SPRY2_RyR"/>
    <property type="match status" value="1"/>
</dbReference>
<dbReference type="CDD" id="cd12879">
    <property type="entry name" value="SPRY3_RyR"/>
    <property type="match status" value="1"/>
</dbReference>
<dbReference type="FunFam" id="1.10.238.10:FF:000040">
    <property type="entry name" value="Ryanodine receptor 2"/>
    <property type="match status" value="1"/>
</dbReference>
<dbReference type="FunFam" id="1.10.490.160:FF:000005">
    <property type="entry name" value="Ryanodine receptor 2"/>
    <property type="match status" value="1"/>
</dbReference>
<dbReference type="FunFam" id="1.10.490.160:FF:000001">
    <property type="entry name" value="Ryanodine receptor 2 (Cardiac)"/>
    <property type="match status" value="1"/>
</dbReference>
<dbReference type="FunFam" id="2.60.120.920:FF:000012">
    <property type="entry name" value="Ryanodine receptor 2 (Cardiac)"/>
    <property type="match status" value="1"/>
</dbReference>
<dbReference type="FunFam" id="2.80.10.50:FF:000006">
    <property type="entry name" value="Ryanodine receptor 2 (Cardiac)"/>
    <property type="match status" value="1"/>
</dbReference>
<dbReference type="FunFam" id="2.80.10.50:FF:000016">
    <property type="entry name" value="Ryanodine receptor 2 (Cardiac)"/>
    <property type="match status" value="1"/>
</dbReference>
<dbReference type="FunFam" id="1.10.287.70:FF:000017">
    <property type="entry name" value="ryanodine receptor isoform X2"/>
    <property type="match status" value="1"/>
</dbReference>
<dbReference type="FunFam" id="1.25.10.30:FF:000002">
    <property type="entry name" value="ryanodine receptor isoform X2"/>
    <property type="match status" value="1"/>
</dbReference>
<dbReference type="FunFam" id="2.60.120.920:FF:000002">
    <property type="entry name" value="ryanodine receptor isoform X2"/>
    <property type="match status" value="1"/>
</dbReference>
<dbReference type="FunFam" id="2.60.120.920:FF:000003">
    <property type="entry name" value="ryanodine receptor isoform X2"/>
    <property type="match status" value="1"/>
</dbReference>
<dbReference type="Gene3D" id="1.10.287.70">
    <property type="match status" value="1"/>
</dbReference>
<dbReference type="Gene3D" id="1.10.490.160">
    <property type="match status" value="3"/>
</dbReference>
<dbReference type="Gene3D" id="2.60.120.920">
    <property type="match status" value="3"/>
</dbReference>
<dbReference type="Gene3D" id="2.80.10.50">
    <property type="match status" value="2"/>
</dbReference>
<dbReference type="Gene3D" id="1.10.238.10">
    <property type="entry name" value="EF-hand"/>
    <property type="match status" value="1"/>
</dbReference>
<dbReference type="Gene3D" id="1.25.10.30">
    <property type="entry name" value="IP3 receptor type 1 binding core, RIH domain"/>
    <property type="match status" value="1"/>
</dbReference>
<dbReference type="InterPro" id="IPR001870">
    <property type="entry name" value="B30.2/SPRY"/>
</dbReference>
<dbReference type="InterPro" id="IPR043136">
    <property type="entry name" value="B30.2/SPRY_sf"/>
</dbReference>
<dbReference type="InterPro" id="IPR013320">
    <property type="entry name" value="ConA-like_dom_sf"/>
</dbReference>
<dbReference type="InterPro" id="IPR011992">
    <property type="entry name" value="EF-hand-dom_pair"/>
</dbReference>
<dbReference type="InterPro" id="IPR002048">
    <property type="entry name" value="EF_hand_dom"/>
</dbReference>
<dbReference type="InterPro" id="IPR014821">
    <property type="entry name" value="Ins145_P3_rcpt"/>
</dbReference>
<dbReference type="InterPro" id="IPR005821">
    <property type="entry name" value="Ion_trans_dom"/>
</dbReference>
<dbReference type="InterPro" id="IPR036300">
    <property type="entry name" value="MIR_dom_sf"/>
</dbReference>
<dbReference type="InterPro" id="IPR016093">
    <property type="entry name" value="MIR_motif"/>
</dbReference>
<dbReference type="InterPro" id="IPR013662">
    <property type="entry name" value="RIH_assoc-dom"/>
</dbReference>
<dbReference type="InterPro" id="IPR000699">
    <property type="entry name" value="RIH_dom"/>
</dbReference>
<dbReference type="InterPro" id="IPR013333">
    <property type="entry name" value="Ryan_recept"/>
</dbReference>
<dbReference type="InterPro" id="IPR015925">
    <property type="entry name" value="Ryanodine_IP3_receptor"/>
</dbReference>
<dbReference type="InterPro" id="IPR003032">
    <property type="entry name" value="Ryanodine_rcpt"/>
</dbReference>
<dbReference type="InterPro" id="IPR009460">
    <property type="entry name" value="Ryanrecept_TM4-6"/>
</dbReference>
<dbReference type="InterPro" id="IPR048581">
    <property type="entry name" value="RYDR_Jsol"/>
</dbReference>
<dbReference type="InterPro" id="IPR035910">
    <property type="entry name" value="RyR/IP3R_RIH_dom_sf"/>
</dbReference>
<dbReference type="InterPro" id="IPR035761">
    <property type="entry name" value="SPRY1_RyR"/>
</dbReference>
<dbReference type="InterPro" id="IPR035764">
    <property type="entry name" value="SPRY2_RyR"/>
</dbReference>
<dbReference type="InterPro" id="IPR035762">
    <property type="entry name" value="SPRY3_RyR"/>
</dbReference>
<dbReference type="InterPro" id="IPR003877">
    <property type="entry name" value="SPRY_dom"/>
</dbReference>
<dbReference type="PANTHER" id="PTHR46399">
    <property type="entry name" value="B30.2/SPRY DOMAIN-CONTAINING PROTEIN"/>
    <property type="match status" value="1"/>
</dbReference>
<dbReference type="PANTHER" id="PTHR46399:SF7">
    <property type="entry name" value="RYANODINE RECEPTOR 2"/>
    <property type="match status" value="1"/>
</dbReference>
<dbReference type="Pfam" id="PF13499">
    <property type="entry name" value="EF-hand_7"/>
    <property type="match status" value="1"/>
</dbReference>
<dbReference type="Pfam" id="PF08709">
    <property type="entry name" value="Ins145_P3_rec"/>
    <property type="match status" value="1"/>
</dbReference>
<dbReference type="Pfam" id="PF00520">
    <property type="entry name" value="Ion_trans"/>
    <property type="match status" value="1"/>
</dbReference>
<dbReference type="Pfam" id="PF02815">
    <property type="entry name" value="MIR"/>
    <property type="match status" value="1"/>
</dbReference>
<dbReference type="Pfam" id="PF08454">
    <property type="entry name" value="RIH_assoc"/>
    <property type="match status" value="1"/>
</dbReference>
<dbReference type="Pfam" id="PF06459">
    <property type="entry name" value="RR_TM4-6"/>
    <property type="match status" value="1"/>
</dbReference>
<dbReference type="Pfam" id="PF01365">
    <property type="entry name" value="RYDR_ITPR"/>
    <property type="match status" value="2"/>
</dbReference>
<dbReference type="Pfam" id="PF21119">
    <property type="entry name" value="RYDR_Jsol"/>
    <property type="match status" value="1"/>
</dbReference>
<dbReference type="Pfam" id="PF02026">
    <property type="entry name" value="RyR"/>
    <property type="match status" value="4"/>
</dbReference>
<dbReference type="Pfam" id="PF00622">
    <property type="entry name" value="SPRY"/>
    <property type="match status" value="3"/>
</dbReference>
<dbReference type="PRINTS" id="PR00795">
    <property type="entry name" value="RYANODINER"/>
</dbReference>
<dbReference type="SMART" id="SM00472">
    <property type="entry name" value="MIR"/>
    <property type="match status" value="4"/>
</dbReference>
<dbReference type="SMART" id="SM00449">
    <property type="entry name" value="SPRY"/>
    <property type="match status" value="3"/>
</dbReference>
<dbReference type="SUPFAM" id="SSF49899">
    <property type="entry name" value="Concanavalin A-like lectins/glucanases"/>
    <property type="match status" value="2"/>
</dbReference>
<dbReference type="SUPFAM" id="SSF47473">
    <property type="entry name" value="EF-hand"/>
    <property type="match status" value="1"/>
</dbReference>
<dbReference type="SUPFAM" id="SSF100909">
    <property type="entry name" value="IP3 receptor type 1 binding core, domain 2"/>
    <property type="match status" value="2"/>
</dbReference>
<dbReference type="SUPFAM" id="SSF82109">
    <property type="entry name" value="MIR domain"/>
    <property type="match status" value="2"/>
</dbReference>
<dbReference type="PROSITE" id="PS50188">
    <property type="entry name" value="B302_SPRY"/>
    <property type="match status" value="3"/>
</dbReference>
<dbReference type="PROSITE" id="PS50919">
    <property type="entry name" value="MIR"/>
    <property type="match status" value="5"/>
</dbReference>
<comment type="function">
    <text evidence="10 22 24 30 31">Cytosolic calcium-activated calcium channel that mediates the release of Ca(2+) from the sarcoplasmic reticulum into the cytosol and thereby plays a key role in triggering cardiac muscle contraction. Aberrant channel activation can lead to cardiac arrhythmia. In cardiac myocytes, calcium release is triggered by increased Ca(2+) cytosolic levels due to activation of the L-type calcium channel CACNA1C. The calcium channel activity is modulated by formation of heterotetramers with RYR3. Required for cellular calcium ion homeostasis. Required for embryonic heart development.</text>
</comment>
<comment type="catalytic activity">
    <reaction evidence="22 30 31">
        <text>Ca(2+)(in) = Ca(2+)(out)</text>
        <dbReference type="Rhea" id="RHEA:29671"/>
        <dbReference type="ChEBI" id="CHEBI:29108"/>
    </reaction>
</comment>
<comment type="activity regulation">
    <text evidence="4">The calcium release is activated by increased cytosolic calcium levels, by nitric oxyde (NO), caffeine and ATP. Channel activity is modulated by the alkaloid ryanodine that binds to the open Ca-release channel with high affinity. At low concentrations, ryanodine maintains the channel in an open conformation. High ryanodine concentrations inhibit channel activity. Channel activity is regulated by calmodulin (CALM). Channel activity is inhibited by magnesium ions, possibly by competition for calcium binding sites.</text>
</comment>
<comment type="subunit">
    <text evidence="3 5 10 23">Homotetramer. Can also form heterotetramers with RYR1 and RYR3 (By similarity). Interacts with FKBP1A and FKBP1B; these interactions may stabilize the channel in its closed state and prevent Ca(2+) leaks. Interacts with CALM and S100A1; these interactions regulate channel activity. Identified in a complex composed of RYR2, FKBP1B, PKA catalytic subunit, PRKAR2A, AKAP6, and the protein phosphatases PP2A and PP1. Interacts directly with FKBP1B, PKA, PP1 and PP2A. Interacts with SELENON (By similarity). In cardiac muscles, identified in a complex, composed of FSD2, CMYA5 and RYR2 (By similarity). Interacts with PKD2 (via N-terminus); regulates RYR2 channel activity (By similarity).</text>
</comment>
<comment type="interaction">
    <interactant intactId="EBI-1170425">
        <id>Q92736</id>
    </interactant>
    <interactant intactId="EBI-1027571">
        <id>P62942</id>
        <label>FKBP1A</label>
    </interactant>
    <organismsDiffer>false</organismsDiffer>
    <experiments>2</experiments>
</comment>
<comment type="interaction">
    <interactant intactId="EBI-1170425">
        <id>Q92736</id>
    </interactant>
    <interactant intactId="EBI-6693977">
        <id>P68106</id>
        <label>FKBP1B</label>
    </interactant>
    <organismsDiffer>false</organismsDiffer>
    <experiments>5</experiments>
</comment>
<comment type="interaction">
    <interactant intactId="EBI-1170425">
        <id>Q92736</id>
    </interactant>
    <interactant intactId="EBI-389668">
        <id>Q00987</id>
        <label>MDM2</label>
    </interactant>
    <organismsDiffer>false</organismsDiffer>
    <experiments>2</experiments>
</comment>
<comment type="subcellular location">
    <subcellularLocation>
        <location evidence="10">Sarcoplasmic reticulum membrane</location>
        <topology evidence="10">Multi-pass membrane protein</topology>
    </subcellularLocation>
</comment>
<comment type="alternative products">
    <event type="alternative splicing"/>
    <isoform>
        <id>Q92736-1</id>
        <name>1</name>
        <sequence type="displayed"/>
    </isoform>
    <isoform>
        <id>Q92736-2</id>
        <name>2</name>
        <sequence type="described" ref="VSP_005953"/>
    </isoform>
</comment>
<comment type="tissue specificity">
    <text evidence="10 33">Detected in heart muscle (at protein level). Heart muscle, brain (cerebellum and hippocampus) and placenta.</text>
</comment>
<comment type="developmental stage">
    <text evidence="32">Expressed in myometrium during pregnancy.</text>
</comment>
<comment type="induction">
    <text evidence="32">By TGFB1.</text>
</comment>
<comment type="domain">
    <text evidence="4">The calcium release channel activity resides in the C-terminal region while the remaining part of the protein resides in the cytoplasm.</text>
</comment>
<comment type="PTM">
    <text evidence="10 24">Channel activity is modulated by phosphorylation. Phosphorylation at Ser-2808 and Ser-2814 increases the open probability of the calcium channel. Phosphorylation is increased in failing heart, leading to calcium leaks and increased cytoplasmic Ca(2+) levels.</text>
</comment>
<comment type="PTM">
    <text evidence="1">Phosphorylation at Ser-2031 by PKA enhances the response to lumenal calcium.</text>
</comment>
<comment type="disease" evidence="11 12 13 14 15 16 17 18 19 20 21 25 27 30">
    <disease id="DI-00249">
        <name>Ventricular tachycardia, catecholaminergic polymorphic, 1, with or without atrial dysfunction and/or dilated cardiomyopathy</name>
        <acronym>CPVT1</acronym>
        <description>An arrhythmogenic disorder characterized by stress-induced, bidirectional ventricular tachycardia that may degenerate into cardiac arrest and cause sudden death. Patients present with recurrent syncope, seizures, or sudden death after physical activity or emotional stress. CPVT1 inheritance is autosomal dominant.</description>
        <dbReference type="MIM" id="604772"/>
    </disease>
    <text>The disease is caused by variants affecting the gene represented in this entry.</text>
</comment>
<comment type="disease" evidence="14 22 31">
    <disease id="DI-06122">
        <name>Ventricular arrhythmias due to cardiac ryanodine receptor calcium release deficiency syndrome</name>
        <acronym>VACRDS</acronym>
        <description>An autosomal dominant arrhythmogenic disorder characterized by syncope, cardiac arrest and/or sudden unexpected death, often in association with physical exertion or acute emotional stress. Patients who survive manifest polymorphic ventricular tachycardia and ventricular fibrillation. Unlike typical catecholaminergic ventricular tachycardia, arrhythmias are not reproducible on exercise stress testing or adrenaline challenge.</description>
        <dbReference type="MIM" id="115000"/>
    </disease>
    <text>The disease is caused by variants affecting the gene represented in this entry.</text>
</comment>
<comment type="similarity">
    <text evidence="34">Belongs to the ryanodine receptor (TC 1.A.3.1) family. RYR2 subfamily.</text>
</comment>
<comment type="sequence caution" evidence="34">
    <conflict type="miscellaneous discrepancy">
        <sequence resource="EMBL-CDS" id="CAH71369"/>
    </conflict>
    <text>Erroneous gene model prediction.</text>
</comment>
<comment type="sequence caution" evidence="34">
    <conflict type="miscellaneous discrepancy">
        <sequence resource="EMBL-CDS" id="CAH71393"/>
    </conflict>
    <text>Erroneous gene model prediction.</text>
</comment>
<comment type="sequence caution" evidence="34">
    <conflict type="miscellaneous discrepancy">
        <sequence resource="EMBL-CDS" id="CAH73918"/>
    </conflict>
    <text>Erroneous gene model prediction.</text>
</comment>
<comment type="sequence caution" evidence="34">
    <conflict type="miscellaneous discrepancy">
        <sequence resource="EMBL-CDS" id="CAI14440"/>
    </conflict>
    <text>Erroneous gene model prediction.</text>
</comment>
<comment type="sequence caution" evidence="34">
    <conflict type="miscellaneous discrepancy">
        <sequence resource="EMBL-CDS" id="CAI15350"/>
    </conflict>
    <text>Erroneous gene model prediction.</text>
</comment>
<comment type="sequence caution" evidence="34">
    <conflict type="miscellaneous discrepancy">
        <sequence resource="EMBL-CDS" id="CAI15936"/>
    </conflict>
    <text>Erroneous gene model prediction.</text>
</comment>
<comment type="sequence caution" evidence="34">
    <conflict type="miscellaneous discrepancy">
        <sequence resource="EMBL-CDS" id="CAI22065"/>
    </conflict>
    <text>Erroneous gene model prediction.</text>
</comment>
<comment type="online information" name="Wikipedia">
    <link uri="https://en.wikipedia.org/wiki/Ryanodine_receptor"/>
    <text>Ryanodine receptor entry</text>
</comment>
<comment type="online information" name="Wikipedia">
    <link uri="https://en.wikipedia.org/wiki/RYR2"/>
    <text>RYR2 entry</text>
</comment>
<sequence length="4967" mass="564567">MADGGEGEDEIQFLRTDDEVVLQCTATIHKEQQKLCLAAEGFGNRLCFLESTSNSKNVPPDLSICTFVLEQSLSVRALQEMLANTVEKSEGQVDVEKWKFMMKTAQGGGHRTLLYGHAILLRHSYSGMYLCCLSTSRSSTDKLAFDVGLQEDTTGEACWWTIHPASKQRSEGEKVRVGDDLILVSVSSERYLHLSYGNGSLHVDAAFQQTLWSVAPISSGSEAAQGYLIGGDVLRLLHGHMDECLTVPSGEHGEEQRRTVHYEGGAVSVHARSLWRLETLRVAWSGSHIRWGQPFRLRHVTTGKYLSLMEDKNLLLMDKEKADVKSTAFTFRSSKEKLDVGVRKEVDGMGTSEIKYGDSVCYIQHVDTGLWLTYQSVDVKSVRMGSIQRKAIMHHEGHMDDGISLSRSQHEESRTARVIRSTVFLFNRFIRGLDALSKKAKASTVDLPIESVSLSLQDLIGYFHPPDEHLEHEDKQNRLRALKNRQNLFQEEGMINLVLECIDRLHVYSSAAHFADVAGREAGESWKSILNSLYELLAALIRGNRKNCAQFSGSLDWLISRLERLEASSGILEVLHCVLVESPEALNIIKEGHIKSIISLLDKHGRNHKVLDVLCSLCVCHGVAVRSNQHLICDNLLPGRDLLLQTRLVNHVSSMRPNIFLGVSEGSAQYKKWYYELMVDHTEPFVTAEATHLRVGWASTEGYSPYPGGGEEWGGNGVGDDLFSYGFDGLHLWSGCIARTVSSPNQHLLRTDDVISCCLDLSAPSISFRINGQPVQGMFENFNIDGLFFPVVSFSAGIKVRFLLGGRHGEFKFLPPPGYAPCYEAVLPKEKLKVEHSREYKQERTYTRDLLGPTVSLTQAAFTPIPVDTSQIVLPPHLERIREKLAENIHELWVMNKIELGWQYGPVRDDNKRQHPCLVEFSKLPEQERNYNLQMSLETLKTLLALGCHVGISDEHAEDKVKKMKLPKNYQLTSGYKPAPMDLSFIKLTPSQEAMVDKLAENAHNVWARDRIRQGWTYGIQQDVKNRRNPRLVPYTLLDDRTKKSNKDSLREAVRTLLGYGYNLEAPDQDHAARAEVCSGTGERFRIFRAEKTYAVKAGRWYFEFETVTAGDMRVGWSRPGCQPDQELGSDERAFAFDGFKAQRWHQGNEHYGRSWQAGDVVGCMVDMNEHTMMFTLNGEILLDDSGSELAFKDFDVGDGFIPVCSLGVAQVGRMNFGKDVSTLKYFTICGLQEGYEPFAVNTNRDITMWLSKRLPQFLQVPSNHEHIEVTRIDGTIDSSPCLKVTQKSFGSQNSNTDIMFYRLSMPIECAEVFSKTVAGGLPGAGLFGPKNDLEDYDADSDFEVLMKTAHGHLVPDRVDKDKEATKPEFNNHKDYAQEKPSRLKQRFLLRRTKPDYSTSHSARLTEDVLADDRDDYDFLMQTSTYYYSVRIFPGQEPANVWVGWITSDFHQYDTGFDLDRVRTVTVTLGDEKGKVHESIKRSNCYMVCAGESMSPGQGRNNNGLEIGCVVDAASGLLTFIANGKELSTYYQVEPSTKLFPAVFAQATSPNVFQFELGRIKNVMPLSAGLFKSEHKNPVPQCPPRLHVQFLSHVLWSRMPNQFLKVDVSRISERQGWLVQCLDPLQFMSLHIPEENRSVDILELTEQEELLKFHYHTLRLYSAVCALGNHRVAHALCSHVDEPQLLYAIENKYMPGLLRAGYYDLLIDIHLSSYATARLMMNNEYIVPMTEETKSITLFPDENKKHGLPGIGLSTSLRPRMQFSSPSFVSISNECYQYSPEFPLDILKSKTIQMLTEAVKEGSLHARDPVGGTTEFLFVPLIKLFYTLLIMGIFHNEDLKHILQLIEPSVFKEAATPEEESDTLEKELSVDDAKLQGAGEEEAKGGKRPKEGLLQMKLPEPVKLQMCLLLQYLCDCQVRHRIEAIVAFSDDFVAKLQDNQRFRYNEVMQALNMSAALTARKTKEFRSPPQEQINMLLNFKDDKSECPCPEEIRDQLLDFHEDLMTHCGIELDEDGSLDGNSDLTIRGRLLSLVEKVTYLKKKQAEKPVESDSKKSSTLQQLISETMVRWAQESVIEDPELVRAMFVLLHRQYDGIGGLVRALPKTYTINGVSVEDTINLLASLGQIRSLLSVRMGKEEEKLMIRGLGDIMNNKVFYQHPNLMRALGMHETVMEVMVNVLGGGESKEITFPKMVANCCRFLCYFCRISRQNQKAMFDHLSYLLENSSVGLASPAMRGSTPLDVAAASVMDNNELALALREPDLEKVVRYLAGCGLQSCQMLVSKGYPDIGWNPVEGERYLDFLRFAVFCNGESVEENANVVVRLLIRRPECFGPALRGEGGNGLLAAMEEAIKIAEDPSRDGPSPNSGSSKTLDTEEEEDDTIHMGNAIMTFYSALIDLLGRCAPEMHLIHAGKGEAIRIRSILRSLIPLGDLVGVISIAFQMPTIAKDGNVVEPDMSAGFCPDHKAAMVLFLDRVYGIEVQDFLLHLLEVGFLPDLRAAASLDTAALSATDMALALNRYLCTAVLPLLTRCAPLFAGTEHHASLIDSLLHTVYRLSKGCSLTKAQRDSIEVCLLSICGQLRPSMMQHLLRRLVFDVPLLNEHAKMPLKLLTNHYERCWKYYCLPGGWGNFGAASEEELHLSRKLFWGIFDALSQKKYEQELFKLALPCLSAVAGALPPDYMESNYVSMMEKQSSMDSEGNFNPQPVDTSNITIPEKLEYFINKYAEHSHDKWSMDKLANGWIYGEIYSDSSKVQPLMKPYKLLSEKEKEIYRWPIKESLKTMLAWGWRIERTREGDSMALYNRTRRISQTSQVSVDAAHGYSPRAIDMSNVTLSRDLHAMAEMMAENYHNIWAKKKKMELESKGGGNHPLLVPYDTLTAKEKAKDREKAQDILKFLQINGYAVSRGFKDLELDTPSIEKRFAYSFLQQLIRYVDEAHQYILEFDGGSRGKGEHFPYEQEIKFFAKVVLPLIDQYFKNHRLYFLSAASRPLCSGGHASNKEKEMVTSLFCKLGVLVRHRISLFGNDATSIVNCLHILGQTLDARTVMKTGLESVKSALRAFLDNAAEDLEKTMENLKQGQFTHTRNQPKGVTQIINYTTVALLPMLSSLFEHIGQHQFGEDLILEDVQVSCYRILTSLYALGTSKSIYVERQRSALGECLAAFAGAFPVAFLETHLDKHNIYSIYNTKSSRERAALSLPTNVEDVCPNIPSLEKLMEEIVELAESGIRYTQMPHVMEVILPMLCSYMSRWWEHGPENNPERAEMCCTALNSEHMNTLLGNILKIIYNNLGIDEGAWMKRLAVFSQPIINKVKPQLLKTHFLPLMEKLKKKAATVVSEEDHLKAEARGDMSEAELLILDEFTTLARDLYAFYPLLIRFVDYNRAKWLKEPNPEAEELFRMVAEVFIYWSKSHNFKREEQNFVVQNEINNMSFLITDTKSKMSKAAVSDQERKKMKRKGDRYSMQTSLIVAALKRLLPIGLNICAPGDQELIALAKNRFSLKDTEDEVRDIIRSNIHLQGKLEDPAIRWQMALYKDLPNRTDDTSDPEKTVERVLDIANVLFHLEQKSKRVGRRHYCLVEHPQRSKKAVWHKLLSKQRKRAVVACFRMAPLYNLPRHRAVNLFLQGYEKSWIETEEHYFEDKLIEDLAKPGAEPPEEDEGTKRVDPLHQLILLFSRTALTEKCKLEEDFLYMAYADIMAKSCHDEEDDDGEEEVKSFEEKEMEKQKLLYQQARLHDRGAAEMVLQTISASKGETGPMVAATLKLGIAILNGGNSTVQQKMLDYLKEKKDVGFFQSLAGLMQSCSVLDLNAFERQNKAEGLGMVTEEGSGEKVLQDDEFTCDLFRFLQLLCEGHNSDFQNYLRTQTGNNTTVNIIISTVDYLLRVQESISDFYWYYSGKDVIDEQGQRNFSKAIQVAKQVFNTLTEYIQGPCTGNQQSLAHSRLWDAVVGFLHVFAHMQMKLSQDSSQIELLKELMDLQKDMVVMLLSMLEGNVVNGTIGKQMVDMLVESSNNVEMILKFFDMFLKLKDLTSSDTFKEYDPDGKGVISKRDFHKAMESHKHYTQSETEFLLSCAETDENETLDYEEFVKRFHEPAKDIGFNVAVLLTNLSEHMPNDTRLQTFLELAESVLNYFQPFLGRIEIMGSAKRIERVYFEISESSRTQWEKPQVKESKRQFIFDVVNEGGEKEKMELFVNFCEDTIFEMQLAAQISESDLNERSANKEESEKERPEEQGPRMAFFSILTVRSALFALRYNILTLMRMLSLKSLKKQMKKVKKMTVKDMVTAFFSSYWSIFMTLLHFVASVFRGFFRIICSLLLGGSLVEGAKKIKVAELLANMPDPTQDEVRGDGEEGERKPLEAALPSEDLTDLKELTEESDLLSDIFGLDLKREGGQYKLIPHNPNAGLSDLMSNPVPMPEVQEKFQEQKAKEEEKEEKEETKSEPEKAEGEDGEKEEKAKEDKGKQKLRQLHTHRYGEPEVPESAFWKKIIAYQQKLLNYFARNFYNMRMLALFVAFAINFILLFYKVSTSSVVEGKELPTRSSSENAKVTSLDSSSHRIIAVHYVLEESSGYMEPTLRILAILHTVISFFCIIGYYCLKVPLVIFKREKEVARKLEFDGLYITEQPSEDDIKGQWDRLVINTQSFPNNYWDKFVKRKVMDKYGEFYGRDRISELLGMDKAALDFSDAREKKKPKKDSSLSAVLNSIDVKYQMWKLGVVFTDNSFLYLAWYMTMSVLGHYNNFFFAAHLLDIAMGFKTLRTILSSVTHNGKQLVLTVGLLAVVVYLYTVVAFNFFRKFYNKSEDGDTPDMKCDDMLTCYMFHMYVGVRAGGGIGDEIEDPAGDEYEIYRIIFDITFFFFVIVILLAIIQGLIIDAFGELRDQQEQVKEDMETKCFICGIGNDYFDTVPHGFETHTLQEHNLANYLFFLMYLINKDETEHTGQESYVWKMYQERCWEFFPAGDCFRKQYEDQLN</sequence>
<evidence type="ECO:0000250" key="1"/>
<evidence type="ECO:0000250" key="2">
    <source>
        <dbReference type="UniProtKB" id="B0LPN4"/>
    </source>
</evidence>
<evidence type="ECO:0000250" key="3">
    <source>
        <dbReference type="UniProtKB" id="E9Q401"/>
    </source>
</evidence>
<evidence type="ECO:0000250" key="4">
    <source>
        <dbReference type="UniProtKB" id="P11716"/>
    </source>
</evidence>
<evidence type="ECO:0000250" key="5">
    <source>
        <dbReference type="UniProtKB" id="P30957"/>
    </source>
</evidence>
<evidence type="ECO:0000255" key="6"/>
<evidence type="ECO:0000255" key="7">
    <source>
        <dbReference type="PROSITE-ProRule" id="PRU00131"/>
    </source>
</evidence>
<evidence type="ECO:0000255" key="8">
    <source>
        <dbReference type="PROSITE-ProRule" id="PRU00548"/>
    </source>
</evidence>
<evidence type="ECO:0000256" key="9">
    <source>
        <dbReference type="SAM" id="MobiDB-lite"/>
    </source>
</evidence>
<evidence type="ECO:0000269" key="10">
    <source>
    </source>
</evidence>
<evidence type="ECO:0000269" key="11">
    <source>
    </source>
</evidence>
<evidence type="ECO:0000269" key="12">
    <source>
    </source>
</evidence>
<evidence type="ECO:0000269" key="13">
    <source>
    </source>
</evidence>
<evidence type="ECO:0000269" key="14">
    <source>
    </source>
</evidence>
<evidence type="ECO:0000269" key="15">
    <source>
    </source>
</evidence>
<evidence type="ECO:0000269" key="16">
    <source>
    </source>
</evidence>
<evidence type="ECO:0000269" key="17">
    <source>
    </source>
</evidence>
<evidence type="ECO:0000269" key="18">
    <source>
    </source>
</evidence>
<evidence type="ECO:0000269" key="19">
    <source>
    </source>
</evidence>
<evidence type="ECO:0000269" key="20">
    <source>
    </source>
</evidence>
<evidence type="ECO:0000269" key="21">
    <source>
    </source>
</evidence>
<evidence type="ECO:0000269" key="22">
    <source>
    </source>
</evidence>
<evidence type="ECO:0000269" key="23">
    <source>
    </source>
</evidence>
<evidence type="ECO:0000269" key="24">
    <source>
    </source>
</evidence>
<evidence type="ECO:0000269" key="25">
    <source>
    </source>
</evidence>
<evidence type="ECO:0000269" key="26">
    <source>
    </source>
</evidence>
<evidence type="ECO:0000269" key="27">
    <source>
    </source>
</evidence>
<evidence type="ECO:0000269" key="28">
    <source>
    </source>
</evidence>
<evidence type="ECO:0000269" key="29">
    <source>
    </source>
</evidence>
<evidence type="ECO:0000269" key="30">
    <source>
    </source>
</evidence>
<evidence type="ECO:0000269" key="31">
    <source>
    </source>
</evidence>
<evidence type="ECO:0000269" key="32">
    <source>
    </source>
</evidence>
<evidence type="ECO:0000269" key="33">
    <source>
    </source>
</evidence>
<evidence type="ECO:0000305" key="34"/>
<evidence type="ECO:0000312" key="35">
    <source>
        <dbReference type="HGNC" id="HGNC:10484"/>
    </source>
</evidence>
<evidence type="ECO:0007744" key="36">
    <source>
        <dbReference type="PDB" id="4JKQ"/>
    </source>
</evidence>
<evidence type="ECO:0007829" key="37">
    <source>
        <dbReference type="PDB" id="4JKQ"/>
    </source>
</evidence>
<evidence type="ECO:0007829" key="38">
    <source>
        <dbReference type="PDB" id="6Y4O"/>
    </source>
</evidence>
<evidence type="ECO:0007829" key="39">
    <source>
        <dbReference type="PDB" id="7KL5"/>
    </source>
</evidence>
<accession>Q92736</accession>
<accession>Q15411</accession>
<accession>Q546N8</accession>
<accession>Q5T3P2</accession>
<name>RYR2_HUMAN</name>
<protein>
    <recommendedName>
        <fullName evidence="34">Ryanodine receptor 2</fullName>
        <shortName>RYR-2</shortName>
        <shortName>RyR2</shortName>
        <shortName>hRYR-2</shortName>
    </recommendedName>
    <alternativeName>
        <fullName>Cardiac muscle ryanodine receptor</fullName>
    </alternativeName>
    <alternativeName>
        <fullName>Cardiac muscle ryanodine receptor-calcium release channel</fullName>
    </alternativeName>
    <alternativeName>
        <fullName>Type 2 ryanodine receptor</fullName>
    </alternativeName>
</protein>
<feature type="chain" id="PRO_0000219361" description="Ryanodine receptor 2">
    <location>
        <begin position="1"/>
        <end position="4967"/>
    </location>
</feature>
<feature type="topological domain" description="Cytoplasmic" evidence="6">
    <location>
        <begin position="1"/>
        <end position="4281"/>
    </location>
</feature>
<feature type="transmembrane region" description="Helical" evidence="6">
    <location>
        <begin position="4282"/>
        <end position="4302"/>
    </location>
</feature>
<feature type="transmembrane region" description="Helical" evidence="6">
    <location>
        <begin position="4504"/>
        <end position="4524"/>
    </location>
</feature>
<feature type="transmembrane region" description="Helical" evidence="6">
    <location>
        <begin position="4580"/>
        <end position="4600"/>
    </location>
</feature>
<feature type="transmembrane region" description="Helical" evidence="6">
    <location>
        <begin position="4730"/>
        <end position="4750"/>
    </location>
</feature>
<feature type="transmembrane region" description="Helical" evidence="6">
    <location>
        <begin position="4769"/>
        <end position="4789"/>
    </location>
</feature>
<feature type="intramembrane region" description="Pore-forming" evidence="1">
    <location>
        <begin position="4820"/>
        <end position="4829"/>
    </location>
</feature>
<feature type="transmembrane region" description="Helical" evidence="6">
    <location>
        <begin position="4850"/>
        <end position="4870"/>
    </location>
</feature>
<feature type="topological domain" description="Cytoplasmic" evidence="6">
    <location>
        <begin position="4871"/>
        <end position="4967"/>
    </location>
</feature>
<feature type="domain" description="MIR 1" evidence="7">
    <location>
        <begin position="110"/>
        <end position="165"/>
    </location>
</feature>
<feature type="domain" description="MIR 2" evidence="7">
    <location>
        <begin position="172"/>
        <end position="217"/>
    </location>
</feature>
<feature type="domain" description="MIR 3" evidence="7">
    <location>
        <begin position="225"/>
        <end position="280"/>
    </location>
</feature>
<feature type="domain" description="MIR 4" evidence="7">
    <location>
        <begin position="286"/>
        <end position="343"/>
    </location>
</feature>
<feature type="domain" description="MIR 5" evidence="7">
    <location>
        <begin position="351"/>
        <end position="408"/>
    </location>
</feature>
<feature type="domain" description="B30.2/SPRY 1" evidence="8">
    <location>
        <begin position="599"/>
        <end position="809"/>
    </location>
</feature>
<feature type="repeat" description="1">
    <location>
        <begin position="853"/>
        <end position="966"/>
    </location>
</feature>
<feature type="repeat" description="2">
    <location>
        <begin position="967"/>
        <end position="1080"/>
    </location>
</feature>
<feature type="domain" description="B30.2/SPRY 2" evidence="8">
    <location>
        <begin position="1025"/>
        <end position="1222"/>
    </location>
</feature>
<feature type="domain" description="B30.2/SPRY 3" evidence="8">
    <location>
        <begin position="1337"/>
        <end position="1562"/>
    </location>
</feature>
<feature type="repeat" description="3">
    <location>
        <begin position="2692"/>
        <end position="2810"/>
    </location>
</feature>
<feature type="repeat" description="4">
    <location>
        <begin position="2812"/>
        <end position="2925"/>
    </location>
</feature>
<feature type="region of interest" description="4 X approximate repeats">
    <location>
        <begin position="853"/>
        <end position="2925"/>
    </location>
</feature>
<feature type="region of interest" description="Disordered" evidence="9">
    <location>
        <begin position="1856"/>
        <end position="1891"/>
    </location>
</feature>
<feature type="region of interest" description="Disordered" evidence="9">
    <location>
        <begin position="2354"/>
        <end position="2379"/>
    </location>
</feature>
<feature type="region of interest" description="Interaction with CALM" evidence="23">
    <location>
        <begin position="3581"/>
        <end position="3610"/>
    </location>
</feature>
<feature type="region of interest" description="Disordered" evidence="9">
    <location>
        <begin position="4210"/>
        <end position="4229"/>
    </location>
</feature>
<feature type="region of interest" description="Disordered" evidence="9">
    <location>
        <begin position="4415"/>
        <end position="4467"/>
    </location>
</feature>
<feature type="coiled-coil region" evidence="6">
    <location>
        <begin position="4412"/>
        <end position="4445"/>
    </location>
</feature>
<feature type="compositionally biased region" description="Basic and acidic residues" evidence="9">
    <location>
        <begin position="1863"/>
        <end position="1874"/>
    </location>
</feature>
<feature type="compositionally biased region" description="Basic and acidic residues" evidence="9">
    <location>
        <begin position="1881"/>
        <end position="1891"/>
    </location>
</feature>
<feature type="compositionally biased region" description="Basic and acidic residues" evidence="9">
    <location>
        <begin position="4211"/>
        <end position="4229"/>
    </location>
</feature>
<feature type="compositionally biased region" description="Basic and acidic residues" evidence="9">
    <location>
        <begin position="4415"/>
        <end position="4459"/>
    </location>
</feature>
<feature type="modified residue" description="Phosphoserine" evidence="3">
    <location>
        <position position="1341"/>
    </location>
</feature>
<feature type="modified residue" description="Phosphoserine" evidence="2">
    <location>
        <position position="1869"/>
    </location>
</feature>
<feature type="modified residue" description="Phosphoserine; by PKA" evidence="3">
    <location>
        <position position="2031"/>
    </location>
</feature>
<feature type="modified residue" description="Phosphoserine" evidence="3">
    <location>
        <position position="2369"/>
    </location>
</feature>
<feature type="modified residue" description="Phosphoserine" evidence="2">
    <location>
        <position position="2697"/>
    </location>
</feature>
<feature type="modified residue" description="Phosphoserine" evidence="3">
    <location>
        <position position="2797"/>
    </location>
</feature>
<feature type="modified residue" description="Phosphoserine; by CaMK2D and PKA" evidence="10 24">
    <location>
        <position position="2808"/>
    </location>
</feature>
<feature type="modified residue" description="Phosphoserine" evidence="3">
    <location>
        <position position="2811"/>
    </location>
</feature>
<feature type="modified residue" description="Phosphoserine; by CaMK2D" evidence="24">
    <location>
        <position position="2814"/>
    </location>
</feature>
<feature type="modified residue" description="Phosphoserine" evidence="3">
    <location>
        <position position="2947"/>
    </location>
</feature>
<feature type="splice variant" id="VSP_005953" description="In isoform 2." evidence="34">
    <original>E</original>
    <variation>EVTGSQRSK</variation>
    <location>
        <position position="3715"/>
    </location>
</feature>
<feature type="sequence variant" id="VAR_075283" description="Found in a patient with short-coupled polymorphic ventricular tachycardia at rest; uncertain significance; no effect on cytosolic Ca(2+) activation." evidence="28 29">
    <original>H</original>
    <variation>D</variation>
    <location>
        <position position="29"/>
    </location>
</feature>
<feature type="sequence variant" id="VAR_044086" description="In CPVT1; dbSNP:rs764772142." evidence="19">
    <original>P</original>
    <variation>S</variation>
    <location>
        <position position="164"/>
    </location>
</feature>
<feature type="sequence variant" id="VAR_044087" description="In CPVT1; dbSNP:rs794728708." evidence="12 15 21">
    <original>R</original>
    <variation>Q</variation>
    <location>
        <position position="176"/>
    </location>
</feature>
<feature type="sequence variant" id="VAR_044088" description="In CPVT1; dbSNP:rs371121679." evidence="19 21">
    <original>R</original>
    <variation>L</variation>
    <location>
        <position position="414"/>
    </location>
</feature>
<feature type="sequence variant" id="VAR_044089" description="In CPVT1; decreases protein stability; dbSNP:rs1349176732." evidence="19 21 27">
    <original>I</original>
    <variation>F</variation>
    <location>
        <position position="419"/>
    </location>
</feature>
<feature type="sequence variant" id="VAR_044090" description="In CPVT1; dbSNP:rs190140598." evidence="15 20">
    <original>R</original>
    <variation>W</variation>
    <location>
        <position position="420"/>
    </location>
</feature>
<feature type="sequence variant" id="VAR_011395" description="In CPVT1; dbSNP:rs121918602." evidence="12 15">
    <original>L</original>
    <variation>P</variation>
    <location>
        <position position="433"/>
    </location>
</feature>
<feature type="sequence variant" id="VAR_079513" description="In CPVT1; uncertain significance; dbSNP:rs376612295." evidence="21">
    <original>P</original>
    <variation>A</variation>
    <location>
        <position position="466"/>
    </location>
</feature>
<feature type="sequence variant" id="VAR_044091" description="In dbSNP:rs16835270.">
    <original>V</original>
    <variation>I</variation>
    <location>
        <position position="507"/>
    </location>
</feature>
<feature type="sequence variant" id="VAR_022078" description="In dbSNP:rs3766871.">
    <original>G</original>
    <variation>S</variation>
    <location>
        <position position="1886"/>
    </location>
</feature>
<feature type="sequence variant" id="VAR_011396" description="In CPVT1; dbSNP:rs121918597." evidence="13 14 20">
    <original>S</original>
    <variation>L</variation>
    <location>
        <position position="2246"/>
    </location>
</feature>
<feature type="sequence variant" id="VAR_023694" description="In CPVT1; dbSNP:rs794728746." evidence="16">
    <original>V</original>
    <variation>I</variation>
    <location>
        <position position="2306"/>
    </location>
</feature>
<feature type="sequence variant" id="VAR_044092" description="In CPVT1; dbSNP:rs794728747." evidence="14">
    <original>E</original>
    <variation>D</variation>
    <location>
        <position position="2311"/>
    </location>
</feature>
<feature type="sequence variant" id="VAR_011397" description="In CPVT1; dbSNP:rs121918603." evidence="11">
    <original>P</original>
    <variation>S</variation>
    <location>
        <position position="2328"/>
    </location>
</feature>
<feature type="sequence variant" id="VAR_011398" description="In CPVT1; dbSNP:rs121918601." evidence="12 15">
    <original>N</original>
    <variation>I</variation>
    <location>
        <position position="2386"/>
    </location>
</feature>
<feature type="sequence variant" id="VAR_044093" description="In CPVT1; dbSNP:rs794728753." evidence="18">
    <original>A</original>
    <variation>P</variation>
    <location>
        <position position="2387"/>
    </location>
</feature>
<feature type="sequence variant" id="VAR_044094" description="In CPVT1; dbSNP:rs772220753." evidence="15">
    <original>Y</original>
    <variation>C</variation>
    <location>
        <position position="2392"/>
    </location>
</feature>
<feature type="sequence variant" id="VAR_044095" description="In CPVT1; dbSNP:rs1456929288." evidence="19 21">
    <original>A</original>
    <variation>T</variation>
    <location>
        <position position="2403"/>
    </location>
</feature>
<feature type="sequence variant" id="VAR_011399" description="In CPVT1; dbSNP:rs121918598." evidence="13 14">
    <original>R</original>
    <variation>S</variation>
    <location>
        <position position="2474"/>
    </location>
</feature>
<feature type="sequence variant" id="VAR_044096" description="In CPVT1; dbSNP:rs769219555." evidence="12 15">
    <original>T</original>
    <variation>M</variation>
    <location>
        <position position="2504"/>
    </location>
</feature>
<feature type="sequence variant" id="VAR_011590" description="In dbSNP:rs34967813." evidence="11">
    <original>Q</original>
    <variation>R</variation>
    <location>
        <position position="2958"/>
    </location>
</feature>
<feature type="sequence variant" id="VAR_085649" description="In VACRDS; decreased function in release of sequestered calcium ion into cytosol by sarcoplasmic reticulum; changed ryanodine-sensitive calcium-release channel activity; mutant channels are less responsive to activation by caffeine and store calcium overload; affects channel sensitivity to cytosolic and luminal calcium activation." evidence="31">
    <original>Q</original>
    <variation>L</variation>
    <location>
        <position position="3774"/>
    </location>
</feature>
<feature type="sequence variant" id="VAR_044097" description="In CPVT1; dbSNP:rs1472508624." evidence="14">
    <original>L</original>
    <variation>F</variation>
    <location>
        <position position="3778"/>
    </location>
</feature>
<feature type="sequence variant" id="VAR_079514" description="In CPVT1; dbSNP:rs1239093704." evidence="21">
    <original>C</original>
    <variation>F</variation>
    <location>
        <position position="3800"/>
    </location>
</feature>
<feature type="sequence variant" id="VAR_044098" description="In CPVT1; changed ryanodine-sensitive calcium-release channel activity; increased sensitivity to cytosolic calcium activation; dbSNP:rs794728777." evidence="14 30">
    <original>G</original>
    <variation>S</variation>
    <location>
        <position position="3946"/>
    </location>
</feature>
<feature type="sequence variant" id="VAR_044099" description="In CPVT1; dbSNP:rs794728784." evidence="20">
    <original>N</original>
    <variation>S</variation>
    <location>
        <position position="4097"/>
    </location>
</feature>
<feature type="sequence variant" id="VAR_011400" description="In CPVT1; dbSNP:rs121918599." evidence="13 14">
    <original>N</original>
    <variation>K</variation>
    <location>
        <position position="4104"/>
    </location>
</feature>
<feature type="sequence variant" id="VAR_079515" description="In CPVT1; changed ryanodine-sensitive calcium-release channel activity; increased sensitivity to cytosolic calcium activation; dbSNP:rs1385881911." evidence="21 30">
    <original>S</original>
    <variation>T</variation>
    <location>
        <position position="4124"/>
    </location>
</feature>
<feature type="sequence variant" id="VAR_044100" description="In CPVT1; dbSNP:rs1349585791." evidence="20">
    <original>E</original>
    <variation>K</variation>
    <location>
        <position position="4146"/>
    </location>
</feature>
<feature type="sequence variant" id="VAR_044101" description="In CPVT1; changed ryanodine-sensitive calcium-release channel activity; increased sensitivity to cytosolic calcium activation; dbSNP:rs1202962809." evidence="20 30">
    <original>T</original>
    <variation>P</variation>
    <location>
        <position position="4158"/>
    </location>
</feature>
<feature type="sequence variant" id="VAR_079516" description="In CPVT1; changed ryanodine-sensitive calcium-release channel activity; increased sensitivity to cytosolic calcium activation; dbSNP:rs1234963411." evidence="25 30">
    <original>Q</original>
    <variation>P</variation>
    <location>
        <position position="4159"/>
    </location>
</feature>
<feature type="sequence variant" id="VAR_085650" description="In VACRDS; decreased function in release of sequestered calcium ion into cytosol by sarcoplasmic reticulum; changed ryanodine-sensitive calcium-release channel activity; mutant channels are less respositive to activation by caffeine and store calcium overload; affects channel sensitivity to cytosolic and luminal calcium activation; dbSNP:rs2149354389." evidence="31">
    <original>T</original>
    <variation>I</variation>
    <location>
        <position position="4196"/>
    </location>
</feature>
<feature type="sequence variant" id="VAR_011401" description="In CPVT1; dbSNP:rs121918605." evidence="11">
    <original>Q</original>
    <variation>R</variation>
    <location>
        <position position="4201"/>
    </location>
</feature>
<feature type="sequence variant" id="VAR_011402" description="In CPVT1; dbSNP:rs121918600." evidence="13 14 20">
    <original>R</original>
    <variation>C</variation>
    <location>
        <position position="4497"/>
    </location>
</feature>
<feature type="sequence variant" id="VAR_044102" description="In CPVT1; dbSNP:rs1457271141." evidence="19 21">
    <original>F</original>
    <variation>C</variation>
    <location>
        <position position="4499"/>
    </location>
</feature>
<feature type="sequence variant" id="VAR_044103" description="In CPVT1; dbSNP:rs1323621379." evidence="17">
    <original>M</original>
    <variation>I</variation>
    <location>
        <position position="4504"/>
    </location>
</feature>
<feature type="sequence variant" id="VAR_044104" description="In CPVT1; dbSNP:rs397516510." evidence="19 21">
    <original>A</original>
    <variation>T</variation>
    <location>
        <position position="4510"/>
    </location>
</feature>
<feature type="sequence variant" id="VAR_079517" description="In CPVT1; dbSNP:rs189345192." evidence="21">
    <original>A</original>
    <variation>T</variation>
    <location>
        <position position="4556"/>
    </location>
</feature>
<feature type="sequence variant" id="VAR_044105" description="In CPVT1; dbSNP:rs1359163728." evidence="18">
    <original>A</original>
    <variation>P</variation>
    <location>
        <position position="4607"/>
    </location>
</feature>
<feature type="sequence variant" id="VAR_085651" description="In VACRDS; decreased function in release of sequestered calcium ion into cytosol by sarcoplasmic reticulum; changed ryanodine-sensitive calcium-release channel activity; mutant channels are less resposive to activation by caffeine and store calcium overload; affects channel sensitivity to cytosolic and luminal calcium activation; dbSNP:rs1658967336." evidence="31">
    <original>D</original>
    <variation>A</variation>
    <location>
        <position position="4646"/>
    </location>
</feature>
<feature type="sequence variant" id="VAR_011403" description="In CPVT1; dbSNP:rs121918604." evidence="11">
    <original>V</original>
    <variation>F</variation>
    <location>
        <position position="4653"/>
    </location>
</feature>
<feature type="sequence variant" id="VAR_044106" description="In CPVT1; dbSNP:rs1188352725." evidence="19">
    <original>G</original>
    <variation>R</variation>
    <location>
        <position position="4671"/>
    </location>
</feature>
<feature type="sequence variant" id="VAR_044107" description="In CPVT1; dbSNP:rs794728804." evidence="14">
    <original>V</original>
    <variation>I</variation>
    <location>
        <position position="4771"/>
    </location>
</feature>
<feature type="sequence variant" id="VAR_044108" description="In CPVT1; dbSNP:rs1363298408." evidence="19 21">
    <original>I</original>
    <variation>V</variation>
    <location>
        <position position="4848"/>
    </location>
</feature>
<feature type="sequence variant" id="VAR_044109" description="In VACRDS; decreased function in release of sequestered calcium ion into cytosol by sarcoplasmic reticulum; changed ryanodine-sensitive calcium-release channel activity; diminishes the response to activation by luminal Ca(2+) but has little effect on the sensitivity of the channel to activation by cytosolic Ca(2+); shows caffeine-induced Ca(2+) release but exhibits no store-overload-induced Ca(2+) release (SOICR); HL1 cardiac cells transfected with the G-4860 mutant displayed attenuated SOICR activity compared to cells transfected with wild-type RYR2; dbSNP:rs121918606." evidence="14 22 31">
    <original>A</original>
    <variation>G</variation>
    <location>
        <position position="4860"/>
    </location>
</feature>
<feature type="sequence variant" id="VAR_044110" description="In CPVT1; dbSNP:rs1218096653." evidence="14">
    <original>I</original>
    <variation>M</variation>
    <location>
        <position position="4867"/>
    </location>
</feature>
<feature type="sequence variant" id="VAR_044111" description="In CPVT1; dbSNP:rs1242723821." evidence="17">
    <original>V</original>
    <variation>A</variation>
    <location>
        <position position="4880"/>
    </location>
</feature>
<feature type="sequence variant" id="VAR_044112" description="In CPVT1; dbSNP:rs1185619003." evidence="14">
    <original>N</original>
    <variation>D</variation>
    <location>
        <position position="4895"/>
    </location>
</feature>
<feature type="sequence variant" id="VAR_023695" description="In CPVT1; dbSNP:rs1475453069." evidence="16">
    <original>P</original>
    <variation>L</variation>
    <location>
        <position position="4902"/>
    </location>
</feature>
<feature type="sequence variant" id="VAR_085652" description="In VACRDS; decreased function in release of sequestered calcium ion into cytosol by sarcoplasmic reticulum; changed ryanodine-sensitive calcium-release channel activity; mutant channels are less respositive to activation by caffeine and store calcium overload; affects channel sensitivity to cytosolic and luminal calcium activation; dbSNP:rs2102967780." evidence="31">
    <original>S</original>
    <variation>F</variation>
    <location>
        <position position="4938"/>
    </location>
</feature>
<feature type="sequence variant" id="VAR_044113" description="In CPVT1; dbSNP:rs886039172." evidence="14">
    <original>E</original>
    <variation>K</variation>
    <location>
        <position position="4950"/>
    </location>
</feature>
<feature type="sequence variant" id="VAR_078648" description="Found in a patient with intellectual disability, seizures, short stature and severe atrial arrhythmias; likely pathogenic; dbSNP:rs1553343100." evidence="26">
    <original>G</original>
    <variation>E</variation>
    <location>
        <position position="4955"/>
    </location>
</feature>
<feature type="sequence variant" id="VAR_023696" description="In CPVT1; dbSNP:rs794728811." evidence="16 21">
    <original>R</original>
    <variation>Q</variation>
    <location>
        <position position="4959"/>
    </location>
</feature>
<feature type="mutagenesis site" description="Abolishes phosphorylation by PKA." evidence="10">
    <original>S</original>
    <variation>A</variation>
    <location>
        <position position="2808"/>
    </location>
</feature>
<feature type="mutagenesis site" description="Changed ryanodine-sensitive calcium-release channel activity characterized by increased sensitivity to cytosolic calcium activation." evidence="30">
    <original>G</original>
    <variation>A</variation>
    <location>
        <position position="3946"/>
    </location>
</feature>
<feature type="mutagenesis site" description="Changed ryanodine-sensitive calcium-release channel activity characterized by increased sensitivity to cytosolic calcium activation." evidence="30">
    <original>M</original>
    <variation>I</variation>
    <location>
        <position position="3978"/>
    </location>
</feature>
<feature type="mutagenesis site" description="Decreased function in release of sequestered calcium ion into cytosol by sarcoplasmic reticulum. Changed ryanodine-sensitive calcium-release channel activity. Mutant channels are less respositive to activation by caffeine and store calcium overload. Affects channel sensitivity to cytosolic and luminal calcium activation." evidence="31">
    <original>I</original>
    <variation>V</variation>
    <location>
        <position position="3995"/>
    </location>
</feature>
<feature type="mutagenesis site" description="Changed ryanodine-sensitive calcium-release channel activity characterized by increased sensitivity to cytosolic calcium activation." evidence="30">
    <original>H</original>
    <variation>N</variation>
    <location>
        <position position="4108"/>
    </location>
</feature>
<feature type="mutagenesis site" description="Changed ryanodine-sensitive calcium-release channel activity characterized by increased sensitivity to cytosolic calcium activation." evidence="30">
    <original>H</original>
    <variation>Q</variation>
    <location>
        <position position="4108"/>
    </location>
</feature>
<feature type="mutagenesis site" description="Decreased function in release of sequestered calcium ion into cytosol by sarcoplasmic reticulum. Changed ryanodine-sensitive calcium-release channel activity. Mutant channels are less respositive to activation by caffeine and store calcium overload. Affects channel sensitivity to cytosolic and luminal calcium activation." evidence="31">
    <original>D</original>
    <variation>N</variation>
    <location>
        <position position="4112"/>
    </location>
</feature>
<feature type="mutagenesis site" description="Decreased function in release of sequestered calcium ion into cytosol by sarcoplasmic reticulum. Changed ryanodine-sensitive calcium-release channel activity. Mutant channels are less respositive to activation by caffeine and store calcium overload. Affects channel sensitivity to cytosolic and luminal calcium activation." evidence="31">
    <original>I</original>
    <variation>M</variation>
    <location>
        <position position="4855"/>
    </location>
</feature>
<feature type="mutagenesis site" description="Decreased function in release of sequestered calcium ion into cytosol by sarcoplasmic reticulum. Changed ryanodine-sensitive calcium-release channel activity. Mutant channels are less respositive to activation by caffeine and store calcium overload. Affects channel sensitivity to cytosolic and luminal calcium activation." evidence="31">
    <original>Q</original>
    <variation>H</variation>
    <location>
        <position position="4879"/>
    </location>
</feature>
<feature type="sequence conflict" description="In Ref. 1; CAA66975 and 2; CAC18855." evidence="34" ref="1 2">
    <original>L</original>
    <variation>P</variation>
    <location>
        <position position="1037"/>
    </location>
</feature>
<feature type="sequence conflict" description="In Ref. 1; CAA66975 and 2; CAC18855." evidence="34" ref="1 2">
    <original>WGWRI</original>
    <variation>RTMRT</variation>
    <location>
        <begin position="2785"/>
        <end position="2789"/>
    </location>
</feature>
<feature type="strand" evidence="37">
    <location>
        <begin position="19"/>
        <end position="28"/>
    </location>
</feature>
<feature type="strand" evidence="37">
    <location>
        <begin position="31"/>
        <end position="38"/>
    </location>
</feature>
<feature type="strand" evidence="37">
    <location>
        <begin position="48"/>
        <end position="51"/>
    </location>
</feature>
<feature type="turn" evidence="37">
    <location>
        <begin position="53"/>
        <end position="57"/>
    </location>
</feature>
<feature type="helix" evidence="37">
    <location>
        <begin position="63"/>
        <end position="65"/>
    </location>
</feature>
<feature type="strand" evidence="37">
    <location>
        <begin position="67"/>
        <end position="73"/>
    </location>
</feature>
<feature type="turn" evidence="37">
    <location>
        <begin position="108"/>
        <end position="110"/>
    </location>
</feature>
<feature type="strand" evidence="37">
    <location>
        <begin position="118"/>
        <end position="127"/>
    </location>
</feature>
<feature type="strand" evidence="37">
    <location>
        <begin position="129"/>
        <end position="132"/>
    </location>
</feature>
<feature type="turn" evidence="37">
    <location>
        <begin position="139"/>
        <end position="141"/>
    </location>
</feature>
<feature type="strand" evidence="37">
    <location>
        <begin position="145"/>
        <end position="151"/>
    </location>
</feature>
<feature type="strand" evidence="37">
    <location>
        <begin position="159"/>
        <end position="166"/>
    </location>
</feature>
<feature type="strand" evidence="37">
    <location>
        <begin position="180"/>
        <end position="185"/>
    </location>
</feature>
<feature type="turn" evidence="37">
    <location>
        <begin position="186"/>
        <end position="188"/>
    </location>
</feature>
<feature type="strand" evidence="37">
    <location>
        <begin position="191"/>
        <end position="196"/>
    </location>
</feature>
<feature type="strand" evidence="37">
    <location>
        <begin position="198"/>
        <end position="208"/>
    </location>
</feature>
<feature type="strand" evidence="37">
    <location>
        <begin position="212"/>
        <end position="218"/>
    </location>
</feature>
<feature type="strand" evidence="37">
    <location>
        <begin position="233"/>
        <end position="238"/>
    </location>
</feature>
<feature type="turn" evidence="37">
    <location>
        <begin position="239"/>
        <end position="242"/>
    </location>
</feature>
<feature type="strand" evidence="37">
    <location>
        <begin position="243"/>
        <end position="246"/>
    </location>
</feature>
<feature type="strand" evidence="37">
    <location>
        <begin position="250"/>
        <end position="252"/>
    </location>
</feature>
<feature type="helix" evidence="37">
    <location>
        <begin position="256"/>
        <end position="258"/>
    </location>
</feature>
<feature type="strand" evidence="37">
    <location>
        <begin position="261"/>
        <end position="263"/>
    </location>
</feature>
<feature type="helix" evidence="37">
    <location>
        <begin position="265"/>
        <end position="269"/>
    </location>
</feature>
<feature type="helix" evidence="37">
    <location>
        <begin position="271"/>
        <end position="273"/>
    </location>
</feature>
<feature type="strand" evidence="37">
    <location>
        <begin position="275"/>
        <end position="280"/>
    </location>
</feature>
<feature type="turn" evidence="37">
    <location>
        <begin position="283"/>
        <end position="286"/>
    </location>
</feature>
<feature type="strand" evidence="37">
    <location>
        <begin position="295"/>
        <end position="299"/>
    </location>
</feature>
<feature type="turn" evidence="37">
    <location>
        <begin position="300"/>
        <end position="302"/>
    </location>
</feature>
<feature type="strand" evidence="37">
    <location>
        <begin position="305"/>
        <end position="308"/>
    </location>
</feature>
<feature type="strand" evidence="37">
    <location>
        <begin position="310"/>
        <end position="312"/>
    </location>
</feature>
<feature type="strand" evidence="37">
    <location>
        <begin position="314"/>
        <end position="317"/>
    </location>
</feature>
<feature type="helix" evidence="37">
    <location>
        <begin position="319"/>
        <end position="321"/>
    </location>
</feature>
<feature type="helix" evidence="37">
    <location>
        <begin position="324"/>
        <end position="327"/>
    </location>
</feature>
<feature type="strand" evidence="37">
    <location>
        <begin position="329"/>
        <end position="336"/>
    </location>
</feature>
<feature type="strand" evidence="37">
    <location>
        <begin position="340"/>
        <end position="342"/>
    </location>
</feature>
<feature type="turn" evidence="37">
    <location>
        <begin position="356"/>
        <end position="358"/>
    </location>
</feature>
<feature type="strand" evidence="37">
    <location>
        <begin position="360"/>
        <end position="365"/>
    </location>
</feature>
<feature type="turn" evidence="37">
    <location>
        <begin position="366"/>
        <end position="368"/>
    </location>
</feature>
<feature type="strand" evidence="37">
    <location>
        <begin position="371"/>
        <end position="375"/>
    </location>
</feature>
<feature type="strand" evidence="37">
    <location>
        <begin position="388"/>
        <end position="396"/>
    </location>
</feature>
<feature type="strand" evidence="37">
    <location>
        <begin position="403"/>
        <end position="407"/>
    </location>
</feature>
<feature type="helix" evidence="37">
    <location>
        <begin position="410"/>
        <end position="437"/>
    </location>
</feature>
<feature type="helix" evidence="37">
    <location>
        <begin position="442"/>
        <end position="444"/>
    </location>
</feature>
<feature type="helix" evidence="37">
    <location>
        <begin position="449"/>
        <end position="462"/>
    </location>
</feature>
<feature type="helix" evidence="37">
    <location>
        <begin position="472"/>
        <end position="491"/>
    </location>
</feature>
<feature type="helix" evidence="37">
    <location>
        <begin position="494"/>
        <end position="506"/>
    </location>
</feature>
<feature type="strand" evidence="37">
    <location>
        <begin position="508"/>
        <end position="510"/>
    </location>
</feature>
<feature type="helix" evidence="37">
    <location>
        <begin position="511"/>
        <end position="518"/>
    </location>
</feature>
<feature type="helix" evidence="37">
    <location>
        <begin position="520"/>
        <end position="541"/>
    </location>
</feature>
<feature type="helix" evidence="38">
    <location>
        <begin position="3584"/>
        <end position="3604"/>
    </location>
</feature>
<feature type="helix" evidence="39">
    <location>
        <begin position="4247"/>
        <end position="4272"/>
    </location>
</feature>
<reference key="1">
    <citation type="journal article" date="1996" name="Biochem. J.">
        <title>The human cardiac muscle ryanodine receptor-calcium release channel: identification, primary structure and topological analysis.</title>
        <authorList>
            <person name="Tunwell R.E.A."/>
            <person name="Wickenden C."/>
            <person name="Bertrand B.M.A."/>
            <person name="Shevchenko V.I."/>
            <person name="Walsh M.B."/>
            <person name="Allen P.D."/>
            <person name="Lai F.A."/>
        </authorList>
    </citation>
    <scope>NUCLEOTIDE SEQUENCE [MRNA]</scope>
    <scope>ALTERNATIVE SPLICING</scope>
    <source>
        <tissue>Heart muscle</tissue>
    </source>
</reference>
<reference key="2">
    <citation type="journal article" date="2001" name="Hum. Mol. Genet.">
        <title>Identification of mutations in the cardiac ryanodine receptor gene in families affected with arrhythmogenic right ventricular cardiomyopathy type 2 (ARVD2).</title>
        <authorList>
            <person name="Tiso N."/>
            <person name="Stephan D.A."/>
            <person name="Nava A."/>
            <person name="Bagattin A."/>
            <person name="Devaney J.M."/>
            <person name="Stanchi F."/>
            <person name="Larderet G."/>
            <person name="Brahmbhatt B."/>
            <person name="Brown K."/>
            <person name="Bauce B."/>
            <person name="Muriago M."/>
            <person name="Basso C."/>
            <person name="Thiene G."/>
            <person name="Danieli G.A."/>
            <person name="Rampazzo A."/>
        </authorList>
    </citation>
    <scope>NUCLEOTIDE SEQUENCE [GENOMIC DNA]</scope>
    <scope>VARIANTS CPVT1 GLN-176; PRO-433; ILE-2386 AND MET-2504</scope>
</reference>
<reference key="3">
    <citation type="journal article" date="2006" name="Nature">
        <title>The DNA sequence and biological annotation of human chromosome 1.</title>
        <authorList>
            <person name="Gregory S.G."/>
            <person name="Barlow K.F."/>
            <person name="McLay K.E."/>
            <person name="Kaul R."/>
            <person name="Swarbreck D."/>
            <person name="Dunham A."/>
            <person name="Scott C.E."/>
            <person name="Howe K.L."/>
            <person name="Woodfine K."/>
            <person name="Spencer C.C.A."/>
            <person name="Jones M.C."/>
            <person name="Gillson C."/>
            <person name="Searle S."/>
            <person name="Zhou Y."/>
            <person name="Kokocinski F."/>
            <person name="McDonald L."/>
            <person name="Evans R."/>
            <person name="Phillips K."/>
            <person name="Atkinson A."/>
            <person name="Cooper R."/>
            <person name="Jones C."/>
            <person name="Hall R.E."/>
            <person name="Andrews T.D."/>
            <person name="Lloyd C."/>
            <person name="Ainscough R."/>
            <person name="Almeida J.P."/>
            <person name="Ambrose K.D."/>
            <person name="Anderson F."/>
            <person name="Andrew R.W."/>
            <person name="Ashwell R.I.S."/>
            <person name="Aubin K."/>
            <person name="Babbage A.K."/>
            <person name="Bagguley C.L."/>
            <person name="Bailey J."/>
            <person name="Beasley H."/>
            <person name="Bethel G."/>
            <person name="Bird C.P."/>
            <person name="Bray-Allen S."/>
            <person name="Brown J.Y."/>
            <person name="Brown A.J."/>
            <person name="Buckley D."/>
            <person name="Burton J."/>
            <person name="Bye J."/>
            <person name="Carder C."/>
            <person name="Chapman J.C."/>
            <person name="Clark S.Y."/>
            <person name="Clarke G."/>
            <person name="Clee C."/>
            <person name="Cobley V."/>
            <person name="Collier R.E."/>
            <person name="Corby N."/>
            <person name="Coville G.J."/>
            <person name="Davies J."/>
            <person name="Deadman R."/>
            <person name="Dunn M."/>
            <person name="Earthrowl M."/>
            <person name="Ellington A.G."/>
            <person name="Errington H."/>
            <person name="Frankish A."/>
            <person name="Frankland J."/>
            <person name="French L."/>
            <person name="Garner P."/>
            <person name="Garnett J."/>
            <person name="Gay L."/>
            <person name="Ghori M.R.J."/>
            <person name="Gibson R."/>
            <person name="Gilby L.M."/>
            <person name="Gillett W."/>
            <person name="Glithero R.J."/>
            <person name="Grafham D.V."/>
            <person name="Griffiths C."/>
            <person name="Griffiths-Jones S."/>
            <person name="Grocock R."/>
            <person name="Hammond S."/>
            <person name="Harrison E.S.I."/>
            <person name="Hart E."/>
            <person name="Haugen E."/>
            <person name="Heath P.D."/>
            <person name="Holmes S."/>
            <person name="Holt K."/>
            <person name="Howden P.J."/>
            <person name="Hunt A.R."/>
            <person name="Hunt S.E."/>
            <person name="Hunter G."/>
            <person name="Isherwood J."/>
            <person name="James R."/>
            <person name="Johnson C."/>
            <person name="Johnson D."/>
            <person name="Joy A."/>
            <person name="Kay M."/>
            <person name="Kershaw J.K."/>
            <person name="Kibukawa M."/>
            <person name="Kimberley A.M."/>
            <person name="King A."/>
            <person name="Knights A.J."/>
            <person name="Lad H."/>
            <person name="Laird G."/>
            <person name="Lawlor S."/>
            <person name="Leongamornlert D.A."/>
            <person name="Lloyd D.M."/>
            <person name="Loveland J."/>
            <person name="Lovell J."/>
            <person name="Lush M.J."/>
            <person name="Lyne R."/>
            <person name="Martin S."/>
            <person name="Mashreghi-Mohammadi M."/>
            <person name="Matthews L."/>
            <person name="Matthews N.S.W."/>
            <person name="McLaren S."/>
            <person name="Milne S."/>
            <person name="Mistry S."/>
            <person name="Moore M.J.F."/>
            <person name="Nickerson T."/>
            <person name="O'Dell C.N."/>
            <person name="Oliver K."/>
            <person name="Palmeiri A."/>
            <person name="Palmer S.A."/>
            <person name="Parker A."/>
            <person name="Patel D."/>
            <person name="Pearce A.V."/>
            <person name="Peck A.I."/>
            <person name="Pelan S."/>
            <person name="Phelps K."/>
            <person name="Phillimore B.J."/>
            <person name="Plumb R."/>
            <person name="Rajan J."/>
            <person name="Raymond C."/>
            <person name="Rouse G."/>
            <person name="Saenphimmachak C."/>
            <person name="Sehra H.K."/>
            <person name="Sheridan E."/>
            <person name="Shownkeen R."/>
            <person name="Sims S."/>
            <person name="Skuce C.D."/>
            <person name="Smith M."/>
            <person name="Steward C."/>
            <person name="Subramanian S."/>
            <person name="Sycamore N."/>
            <person name="Tracey A."/>
            <person name="Tromans A."/>
            <person name="Van Helmond Z."/>
            <person name="Wall M."/>
            <person name="Wallis J.M."/>
            <person name="White S."/>
            <person name="Whitehead S.L."/>
            <person name="Wilkinson J.E."/>
            <person name="Willey D.L."/>
            <person name="Williams H."/>
            <person name="Wilming L."/>
            <person name="Wray P.W."/>
            <person name="Wu Z."/>
            <person name="Coulson A."/>
            <person name="Vaudin M."/>
            <person name="Sulston J.E."/>
            <person name="Durbin R.M."/>
            <person name="Hubbard T."/>
            <person name="Wooster R."/>
            <person name="Dunham I."/>
            <person name="Carter N.P."/>
            <person name="McVean G."/>
            <person name="Ross M.T."/>
            <person name="Harrow J."/>
            <person name="Olson M.V."/>
            <person name="Beck S."/>
            <person name="Rogers J."/>
            <person name="Bentley D.R."/>
        </authorList>
    </citation>
    <scope>NUCLEOTIDE SEQUENCE [LARGE SCALE GENOMIC DNA]</scope>
</reference>
<reference key="4">
    <citation type="journal article" date="1997" name="Biochem. J.">
        <title>Differential expression of ryanodine receptor RyR2 mRNA in the non-pregnant and pregnant human myometrium.</title>
        <authorList>
            <person name="Awad S.S."/>
            <person name="Lamb H.K."/>
            <person name="Morgan J.M."/>
            <person name="Dunlop W."/>
            <person name="Gillespie J.I."/>
        </authorList>
    </citation>
    <scope>NUCLEOTIDE SEQUENCE [MRNA] OF 9-87 AND 533-681</scope>
    <scope>DEVELOPMENTAL STAGE</scope>
    <scope>INDUCTION BY TGFB1</scope>
    <source>
        <tissue>Heart muscle</tissue>
        <tissue>Myometrium</tissue>
    </source>
</reference>
<reference key="5">
    <citation type="journal article" date="1998" name="Neuroscience">
        <title>Partial cloning and differential expression of ryanodine receptor/calcium-release channel genes in human tissues including the hippocampus and cerebellum.</title>
        <authorList>
            <person name="Martin C."/>
            <person name="Chapman K.E."/>
            <person name="Seckl J.R."/>
            <person name="Ashley R.H."/>
        </authorList>
    </citation>
    <scope>NUCLEOTIDE SEQUENCE [MRNA] OF 4292-4479</scope>
    <scope>TISSUE SPECIFICITY</scope>
    <source>
        <tissue>Cerebellum</tissue>
        <tissue>Hippocampus</tissue>
    </source>
</reference>
<reference key="6">
    <citation type="journal article" date="2000" name="Cell">
        <title>PKA phosphorylation dissociates FKBP12.6 from the calcium release channel (ryanodine receptor): defective regulation in failing hearts.</title>
        <authorList>
            <person name="Marx S.O."/>
            <person name="Reiken S."/>
            <person name="Hisamatsu Y."/>
            <person name="Jayaraman T."/>
            <person name="Burkhoff D."/>
            <person name="Rosemblit N."/>
            <person name="Marks A.R."/>
        </authorList>
    </citation>
    <scope>FUNCTION</scope>
    <scope>IDENTIFICATION IN A COMPLEX WITH FKBP1B; PP1; PP2A AKAP6 AND PKA</scope>
    <scope>INTERACTION WITH FKBP1B; PKA; PP1 AND PP2A</scope>
    <scope>SUBCELLULAR LOCATION</scope>
    <scope>TISSUE SPECIFICITY</scope>
    <scope>MUTAGENESIS OF SER-2808</scope>
    <scope>PHOSPHORYLATION AT SER-2808</scope>
</reference>
<reference key="7">
    <citation type="journal article" date="2008" name="J. Biol. Chem.">
        <title>S100A1 and calmodulin compete for the same binding site on ryanodine receptor.</title>
        <authorList>
            <person name="Wright N.T."/>
            <person name="Prosser B.L."/>
            <person name="Varney K.M."/>
            <person name="Zimmer D.B."/>
            <person name="Schneider M.F."/>
            <person name="Weber D.J."/>
        </authorList>
    </citation>
    <scope>INTERACTION WITH CALM AND S100A1</scope>
</reference>
<reference key="8">
    <citation type="journal article" date="2010" name="Circ. Res.">
        <title>CaMKII-dependent diastolic SR Ca2+ leak and elevated diastolic Ca2+ levels in right atrial myocardium of patients with atrial fibrillation.</title>
        <authorList>
            <person name="Neef S."/>
            <person name="Dybkova N."/>
            <person name="Sossalla S."/>
            <person name="Ort K.R."/>
            <person name="Fluschnik N."/>
            <person name="Neumann K."/>
            <person name="Seipelt R."/>
            <person name="Schondube F.A."/>
            <person name="Hasenfuss G."/>
            <person name="Maier L.S."/>
        </authorList>
    </citation>
    <scope>FUNCTION</scope>
    <scope>PHOSPHORYLATION AT SER-2808 AND SER-2814</scope>
</reference>
<reference key="9">
    <citation type="journal article" date="2002" name="Nature">
        <title>Cardiac excitation-contraction coupling.</title>
        <authorList>
            <person name="Bers D.M."/>
        </authorList>
    </citation>
    <scope>REVIEW</scope>
</reference>
<reference key="10">
    <citation type="journal article" date="2009" name="Front. Biosci.">
        <title>Cardiac ryanodine receptor phosphorylation by CaM Kinase II: keeping the balance right.</title>
        <authorList>
            <person name="Currie S."/>
        </authorList>
    </citation>
    <scope>REVIEW</scope>
</reference>
<reference key="11">
    <citation type="journal article" date="2010" name="Mol. Med. Report.">
        <title>Modulation of ryanodine receptor Ca2+ channels.</title>
        <authorList>
            <person name="Ozawa T."/>
        </authorList>
    </citation>
    <scope>REVIEW</scope>
</reference>
<reference key="12">
    <citation type="journal article" date="2010" name="Cold Spring Harb. Perspect. Biol.">
        <title>Ryanodine receptors: structure, expression, molecular details, and function in calcium release.</title>
        <authorList>
            <person name="Lanner J.T."/>
            <person name="Georgiou D.K."/>
            <person name="Joshi A.D."/>
            <person name="Hamilton S.L."/>
        </authorList>
    </citation>
    <scope>REVIEW</scope>
</reference>
<reference evidence="36" key="13">
    <citation type="journal article" date="2014" name="Acta Crystallogr. D">
        <title>Structural insights into the human RyR2 N-terminal region involved in cardiac arrhythmias.</title>
        <authorList>
            <person name="Borko L."/>
            <person name="Bauerova-Hlinkova V."/>
            <person name="Hostinova E."/>
            <person name="Gasperik J."/>
            <person name="Beck K."/>
            <person name="Lai F.A."/>
            <person name="Zahradnikova A."/>
            <person name="Sevcik J."/>
        </authorList>
    </citation>
    <scope>X-RAY CRYSTALLOGRAPHY (2.39 ANGSTROMS) OF 1-606</scope>
    <scope>CHARACTERIZATION OF VARIANT CPVT1 PHE-419</scope>
</reference>
<reference key="14">
    <citation type="journal article" date="2001" name="Circulation">
        <title>Mutations in the cardiac ryanodine receptor gene (hRyR2) underlie catecholaminergic polymorphic ventricular tachycardia.</title>
        <authorList>
            <person name="Priori S.G."/>
            <person name="Napolitano C."/>
            <person name="Tiso N."/>
            <person name="Memmi M."/>
            <person name="Vignati G."/>
            <person name="Bloise R."/>
            <person name="Sorrentino V.V."/>
            <person name="Danieli G.A."/>
        </authorList>
    </citation>
    <scope>VARIANTS CPVT1 LEU-2246; SER-2474; LYS-4104 AND CYS-4497</scope>
</reference>
<reference key="15">
    <citation type="journal article" date="2001" name="Circulation">
        <title>Mutations of the cardiac ryanodine receptor (RyR2) gene in familial polymorphic ventricular tachycardia.</title>
        <authorList>
            <person name="Laitinen P.J."/>
            <person name="Brown K.M."/>
            <person name="Piippo K."/>
            <person name="Swan H."/>
            <person name="Devaney J.M."/>
            <person name="Brahmbhatt B."/>
            <person name="Donarum E.A."/>
            <person name="Marino M."/>
            <person name="Tiso N."/>
            <person name="Viitasalo M."/>
            <person name="Toivonen L."/>
            <person name="Stephan D.A."/>
            <person name="Kontula K."/>
        </authorList>
    </citation>
    <scope>VARIANTS CPVT1 SER-2328; ARG-4201 AND PHE-4653</scope>
    <scope>VARIANT ARG-2958</scope>
</reference>
<reference key="16">
    <citation type="journal article" date="2002" name="Circulation">
        <title>Clinical and molecular characterization of patients with catecholaminergic polymorphic ventricular tachycardia.</title>
        <authorList>
            <person name="Priori S.G."/>
            <person name="Napolitano C."/>
            <person name="Memmi M."/>
            <person name="Colombi B."/>
            <person name="Drago F."/>
            <person name="Gasparini M."/>
            <person name="DeSimone L."/>
            <person name="Coltorti F."/>
            <person name="Bloise R."/>
            <person name="Keegan R."/>
            <person name="Cruz Filho F.E.S."/>
            <person name="Vignati G."/>
            <person name="Benatar A."/>
            <person name="DeLogu A."/>
        </authorList>
    </citation>
    <scope>VARIANTS CPVT1 LEU-2246; ASP-2311; SER-2474; PHE-3778; SER-3946; SER-3946; LYS-4104; CYS-4497; ILE-4771; MET-4867; ASP-4895 AND LYS-4950</scope>
    <scope>VARIANT VACRDS GLY-4860</scope>
</reference>
<reference key="17">
    <citation type="journal article" date="2002" name="J. Am. Coll. Cardiol.">
        <title>Screening for ryanodine receptor type 2 mutations in families with effort-induced polymorphic ventricular arrhythmias and sudden death: early diagnosis of asymptomatic carriers.</title>
        <authorList>
            <person name="Bauce B."/>
            <person name="Rampazzo A."/>
            <person name="Basso C."/>
            <person name="Bagattin A."/>
            <person name="Daliento L."/>
            <person name="Tiso N."/>
            <person name="Turrini P."/>
            <person name="Thiene G."/>
            <person name="Danieli G.A."/>
            <person name="Nava A."/>
        </authorList>
    </citation>
    <scope>VARIANTS CPVT1 GLN-176; TRP-420; PRO-433; ILE-2386; CYS-2392 AND MET-2504</scope>
</reference>
<reference key="18">
    <citation type="journal article" date="2003" name="Eur. J. Hum. Genet.">
        <title>Molecular genetics of exercise-induced polymorphic ventricular tachycardia: identification of three novel cardiac ryanodine receptor mutations and two common calsequestrin 2 amino-acid polymorphisms.</title>
        <authorList>
            <person name="Laitinen P.J."/>
            <person name="Swan H."/>
            <person name="Kontula K."/>
        </authorList>
    </citation>
    <scope>VARIANTS CPVT1 ILE-2306; LEU-4902 AND GLN-4959</scope>
</reference>
<reference key="19">
    <citation type="journal article" date="2004" name="Circulation">
        <title>Spectrum and frequency of cardiac channel defects in swimming-triggered arrhythmia syndromes.</title>
        <authorList>
            <person name="Choi G."/>
            <person name="Kopplin L.J."/>
            <person name="Tester D.J."/>
            <person name="Will M.L."/>
            <person name="Haglund C.M."/>
            <person name="Ackerman M.J."/>
        </authorList>
    </citation>
    <scope>VARIANTS CPVT1 SER-164; LEU-414; PHE-419; THR-2403; CYS-4499; THR-4510; ARG-4671 AND VAL-4848</scope>
</reference>
<reference key="20">
    <citation type="journal article" date="2004" name="Hum. Genet.">
        <title>Gene symbol: RYR2. Disease: effort-induced polymorphic ventricular arrhythmias.</title>
        <authorList>
            <person name="Bagattin A."/>
            <person name="Veronese C."/>
            <person name="Rampazzo A."/>
            <person name="Danieli G.A."/>
        </authorList>
    </citation>
    <scope>VARIANTS CPVT1 ILE-4504 AND ALA-4880</scope>
</reference>
<reference key="21">
    <citation type="journal article" date="2004" name="Hum. Genet.">
        <title>Gene symbol: RYR2. Disease: effort-induced polymorphic ventricular arrhythmias.</title>
        <authorList>
            <person name="Bagattin A."/>
            <person name="Veronese C."/>
            <person name="Rampazzo A."/>
            <person name="Danieli G.A."/>
        </authorList>
    </citation>
    <scope>VARIANTS CPVT1 PRO-2387 AND PRO-4607</scope>
</reference>
<reference key="22">
    <citation type="journal article" date="2004" name="Mayo Clin. Proc.">
        <title>Targeted mutational analysis of the RyR2-encoded cardiac ryanodine receptor in sudden unexplained death: a molecular autopsy of 49 medical examiner/coroner's cases.</title>
        <authorList>
            <person name="Tester D.J."/>
            <person name="Spoon D.B."/>
            <person name="Valdivia H.H."/>
            <person name="Makielski J.C."/>
            <person name="Ackerman M.J."/>
        </authorList>
    </citation>
    <scope>VARIANTS CPVT1 TRP-420; LEU-2246; SER-4097; LYS-4146; PRO-4158 AND CYS-4497</scope>
</reference>
<reference key="23">
    <citation type="journal article" date="2005" name="Heart Rhythm">
        <title>Spectrum and prevalence of cardiac ryanodine receptor (RyR2) mutations in a cohort of unrelated patients referred explicitly for long QT syndrome genetic testing.</title>
        <authorList>
            <person name="Tester D.J."/>
            <person name="Kopplin L.J."/>
            <person name="Will M.L."/>
            <person name="Ackerman M.J."/>
        </authorList>
    </citation>
    <scope>VARIANTS CPVT1 GLN-176; LEU-414; PHE-419; ALA-466; THR-2403; PHE-3800; THR-4124; CYS-4499; THR-4510; THR-4556; VAL-4848 AND GLN-4959</scope>
</reference>
<reference key="24">
    <citation type="journal article" date="2014" name="PLoS Genet.">
        <title>De novo mutations in moderate or severe intellectual disability.</title>
        <authorList>
            <person name="Hamdan F.F."/>
            <person name="Srour M."/>
            <person name="Capo-Chichi J.M."/>
            <person name="Daoud H."/>
            <person name="Nassif C."/>
            <person name="Patry L."/>
            <person name="Massicotte C."/>
            <person name="Ambalavanan A."/>
            <person name="Spiegelman D."/>
            <person name="Diallo O."/>
            <person name="Henrion E."/>
            <person name="Dionne-Laporte A."/>
            <person name="Fougerat A."/>
            <person name="Pshezhetsky A.V."/>
            <person name="Venkateswaran S."/>
            <person name="Rouleau G.A."/>
            <person name="Michaud J.L."/>
        </authorList>
    </citation>
    <scope>VARIANT GLU-4955</scope>
</reference>
<reference key="25">
    <citation type="journal article" date="2007" name="Proc. Natl. Acad. Sci. U.S.A.">
        <title>Loss of luminal Ca(2+) activation in the cardiac ryanodine receptor is associated with ventricular fibrillation and sudden death.</title>
        <authorList>
            <person name="Jiang D."/>
            <person name="Chen W."/>
            <person name="Wang R."/>
            <person name="Zhang L."/>
            <person name="Chen S.R.W."/>
        </authorList>
    </citation>
    <scope>CHARACTERIZATION OF VARIANT VACRDS GLY-4860</scope>
    <scope>FUNCTION</scope>
    <scope>TRANSPORTER ACTIVITY</scope>
</reference>
<reference key="26">
    <citation type="journal article" date="2014" name="Heart Rhythm">
        <title>A novel RyR2 mutation in a 2-year-old baby presenting with atrial fibrillation, atrial flutter, and atrial ectopic tachycardia.</title>
        <authorList>
            <person name="Di Pino A."/>
            <person name="Caruso E."/>
            <person name="Costanzo L."/>
            <person name="Guccione P."/>
        </authorList>
    </citation>
    <scope>VARIANT CPVT1 PRO-4159</scope>
</reference>
<reference key="27">
    <citation type="journal article" date="2015" name="Int. J. Cardiol.">
        <title>Short-coupled polymorphic ventricular tachycardia at rest linked to a novel ryanodine receptor (RyR2) mutation: leaky RyR2 channels under non-stress conditions.</title>
        <authorList>
            <person name="Cheung J.W."/>
            <person name="Meli A.C."/>
            <person name="Xie W."/>
            <person name="Mittal S."/>
            <person name="Reiken S."/>
            <person name="Wronska A."/>
            <person name="Xu L."/>
            <person name="Steinberg J.S."/>
            <person name="Markowitz S.M."/>
            <person name="Iwai S."/>
            <person name="Lacampagne A."/>
            <person name="Lerman B.B."/>
            <person name="Marks A.R."/>
        </authorList>
    </citation>
    <scope>VARIANT ASP-29</scope>
</reference>
<reference key="28">
    <citation type="journal article" date="2015" name="PLoS ONE">
        <title>The H29D nutation does not enhance cytosolic Ca2+ activation of the cardiac ryanodine receptor.</title>
        <authorList>
            <person name="Xiao Z."/>
            <person name="Guo W."/>
            <person name="Yuen S.M."/>
            <person name="Wang R."/>
            <person name="Zhang L."/>
            <person name="Van Petegem F."/>
            <person name="Chen S.R."/>
        </authorList>
    </citation>
    <scope>CHARACTERIZATION OF VARIANT ASP-29</scope>
</reference>
<reference key="29">
    <citation type="journal article" date="2016" name="J. Biol. Chem.">
        <title>Enhanced cytosolic Ca2+ activation underlies a common defect of central domain cardiac ryanodine receptor mutations linked to arrhythmias.</title>
        <authorList>
            <person name="Xiao Z."/>
            <person name="Guo W."/>
            <person name="Sun B."/>
            <person name="Hunt D.J."/>
            <person name="Wei J."/>
            <person name="Liu Y."/>
            <person name="Wang Y."/>
            <person name="Wang R."/>
            <person name="Jones P.P."/>
            <person name="Back T.G."/>
            <person name="Chen S.R."/>
        </authorList>
    </citation>
    <scope>CHARACTERIZATION OF VARIANTS CVPT1 SER-3946; THR-4124; PRO-4158 AND PRO-4159</scope>
    <scope>MUTAGENESIS OF GLY-3946; MET-3978 AND HIS-4108</scope>
    <scope>FUNCTION</scope>
    <scope>TRANSPORTER ACTIVITY</scope>
</reference>
<reference key="30">
    <citation type="journal article" date="2021" name="Sci. Transl. Med.">
        <title>Cardiac ryanodine receptor calcium release deficiency syndrome.</title>
        <authorList>
            <person name="Sun B."/>
            <person name="Yao J."/>
            <person name="Ni M."/>
            <person name="Wei J."/>
            <person name="Zhong X."/>
            <person name="Guo W."/>
            <person name="Zhang L."/>
            <person name="Wang R."/>
            <person name="Belke D."/>
            <person name="Chen Y.X."/>
            <person name="Lieve K.V.V."/>
            <person name="Broendberg A.K."/>
            <person name="Roston T.M."/>
            <person name="Blankoff I."/>
            <person name="Kammeraad J.A."/>
            <person name="von Alvensleben J.C."/>
            <person name="Lazarte J."/>
            <person name="Vallmitjana A."/>
            <person name="Bohne L.J."/>
            <person name="Rose R.A."/>
            <person name="Benitez R."/>
            <person name="Hove-Madsen L."/>
            <person name="Napolitano C."/>
            <person name="Hegele R.A."/>
            <person name="Fill M."/>
            <person name="Sanatani S."/>
            <person name="Wilde A.A.M."/>
            <person name="Roberts J.D."/>
            <person name="Priori S.G."/>
            <person name="Jensen H.K."/>
            <person name="Chen S.R.W."/>
        </authorList>
    </citation>
    <scope>VARIANTS VACRDS LEU-3774; ILE-4196; ALA-4646; GLY-4860 AND PHE-4938</scope>
    <scope>INVOLVEMENT IN VACRDS</scope>
    <scope>CHARACTERIZATION OF VARIANTS VACRDS LEU-3774; ILE-4196; ALA-4646; GLY-4860 AND PHE-4938</scope>
    <scope>MUTAGENESIS OF ILE-3995; ASP-4112; ILE-4855 AND GLN-4879</scope>
    <scope>FUNCTION</scope>
    <scope>TRANSPORTER ACTIVITY</scope>
</reference>
<keyword id="KW-0002">3D-structure</keyword>
<keyword id="KW-0025">Alternative splicing</keyword>
<keyword id="KW-0106">Calcium</keyword>
<keyword id="KW-0107">Calcium channel</keyword>
<keyword id="KW-0109">Calcium transport</keyword>
<keyword id="KW-0112">Calmodulin-binding</keyword>
<keyword id="KW-0122">Cardiomyopathy</keyword>
<keyword id="KW-0175">Coiled coil</keyword>
<keyword id="KW-0217">Developmental protein</keyword>
<keyword id="KW-0225">Disease variant</keyword>
<keyword id="KW-0407">Ion channel</keyword>
<keyword id="KW-0406">Ion transport</keyword>
<keyword id="KW-1071">Ligand-gated ion channel</keyword>
<keyword id="KW-0472">Membrane</keyword>
<keyword id="KW-0597">Phosphoprotein</keyword>
<keyword id="KW-1267">Proteomics identification</keyword>
<keyword id="KW-0675">Receptor</keyword>
<keyword id="KW-1185">Reference proteome</keyword>
<keyword id="KW-0677">Repeat</keyword>
<keyword id="KW-0703">Sarcoplasmic reticulum</keyword>
<keyword id="KW-0812">Transmembrane</keyword>
<keyword id="KW-1133">Transmembrane helix</keyword>
<keyword id="KW-0813">Transport</keyword>
<gene>
    <name evidence="35" type="primary">RYR2</name>
</gene>